<keyword id="KW-0002">3D-structure</keyword>
<keyword id="KW-0007">Acetylation</keyword>
<keyword id="KW-0021">Allosteric enzyme</keyword>
<keyword id="KW-0025">Alternative splicing</keyword>
<keyword id="KW-0067">ATP-binding</keyword>
<keyword id="KW-1003">Cell membrane</keyword>
<keyword id="KW-0225">Disease variant</keyword>
<keyword id="KW-0325">Glycoprotein</keyword>
<keyword id="KW-0436">Ligase</keyword>
<keyword id="KW-0472">Membrane</keyword>
<keyword id="KW-0496">Mitochondrion</keyword>
<keyword id="KW-0547">Nucleotide-binding</keyword>
<keyword id="KW-0539">Nucleus</keyword>
<keyword id="KW-0597">Phosphoprotein</keyword>
<keyword id="KW-1267">Proteomics identification</keyword>
<keyword id="KW-1185">Reference proteome</keyword>
<keyword id="KW-0677">Repeat</keyword>
<keyword id="KW-0809">Transit peptide</keyword>
<keyword id="KW-0835">Urea cycle</keyword>
<proteinExistence type="evidence at protein level"/>
<dbReference type="EC" id="6.3.4.16" evidence="23 26"/>
<dbReference type="EMBL" id="D90282">
    <property type="protein sequence ID" value="BAA14328.1"/>
    <property type="molecule type" value="mRNA"/>
</dbReference>
<dbReference type="EMBL" id="Y15793">
    <property type="protein sequence ID" value="CAA75785.1"/>
    <property type="molecule type" value="mRNA"/>
</dbReference>
<dbReference type="EMBL" id="AF154830">
    <property type="protein sequence ID" value="AAD38072.1"/>
    <property type="molecule type" value="mRNA"/>
</dbReference>
<dbReference type="EMBL" id="AY317138">
    <property type="protein sequence ID" value="AAP84318.1"/>
    <property type="molecule type" value="mRNA"/>
</dbReference>
<dbReference type="EMBL" id="AY167007">
    <property type="protein sequence ID" value="AAO31763.1"/>
    <property type="molecule type" value="Genomic_DNA"/>
</dbReference>
<dbReference type="EMBL" id="AY166970">
    <property type="protein sequence ID" value="AAO31763.1"/>
    <property type="status" value="JOINED"/>
    <property type="molecule type" value="Genomic_DNA"/>
</dbReference>
<dbReference type="EMBL" id="AY166971">
    <property type="protein sequence ID" value="AAO31763.1"/>
    <property type="status" value="JOINED"/>
    <property type="molecule type" value="Genomic_DNA"/>
</dbReference>
<dbReference type="EMBL" id="AY166972">
    <property type="protein sequence ID" value="AAO31763.1"/>
    <property type="status" value="JOINED"/>
    <property type="molecule type" value="Genomic_DNA"/>
</dbReference>
<dbReference type="EMBL" id="AY166973">
    <property type="protein sequence ID" value="AAO31763.1"/>
    <property type="status" value="JOINED"/>
    <property type="molecule type" value="Genomic_DNA"/>
</dbReference>
<dbReference type="EMBL" id="AY166974">
    <property type="protein sequence ID" value="AAO31763.1"/>
    <property type="status" value="JOINED"/>
    <property type="molecule type" value="Genomic_DNA"/>
</dbReference>
<dbReference type="EMBL" id="AY166975">
    <property type="protein sequence ID" value="AAO31763.1"/>
    <property type="status" value="JOINED"/>
    <property type="molecule type" value="Genomic_DNA"/>
</dbReference>
<dbReference type="EMBL" id="AY166976">
    <property type="protein sequence ID" value="AAO31763.1"/>
    <property type="status" value="JOINED"/>
    <property type="molecule type" value="Genomic_DNA"/>
</dbReference>
<dbReference type="EMBL" id="AY166977">
    <property type="protein sequence ID" value="AAO31763.1"/>
    <property type="status" value="JOINED"/>
    <property type="molecule type" value="Genomic_DNA"/>
</dbReference>
<dbReference type="EMBL" id="AY166978">
    <property type="protein sequence ID" value="AAO31763.1"/>
    <property type="status" value="JOINED"/>
    <property type="molecule type" value="Genomic_DNA"/>
</dbReference>
<dbReference type="EMBL" id="AY166979">
    <property type="protein sequence ID" value="AAO31763.1"/>
    <property type="status" value="JOINED"/>
    <property type="molecule type" value="Genomic_DNA"/>
</dbReference>
<dbReference type="EMBL" id="AY166980">
    <property type="protein sequence ID" value="AAO31763.1"/>
    <property type="status" value="JOINED"/>
    <property type="molecule type" value="Genomic_DNA"/>
</dbReference>
<dbReference type="EMBL" id="AY166981">
    <property type="protein sequence ID" value="AAO31763.1"/>
    <property type="status" value="JOINED"/>
    <property type="molecule type" value="Genomic_DNA"/>
</dbReference>
<dbReference type="EMBL" id="AY166982">
    <property type="protein sequence ID" value="AAO31763.1"/>
    <property type="status" value="JOINED"/>
    <property type="molecule type" value="Genomic_DNA"/>
</dbReference>
<dbReference type="EMBL" id="AY166983">
    <property type="protein sequence ID" value="AAO31763.1"/>
    <property type="status" value="JOINED"/>
    <property type="molecule type" value="Genomic_DNA"/>
</dbReference>
<dbReference type="EMBL" id="AY166984">
    <property type="protein sequence ID" value="AAO31763.1"/>
    <property type="status" value="JOINED"/>
    <property type="molecule type" value="Genomic_DNA"/>
</dbReference>
<dbReference type="EMBL" id="AY166985">
    <property type="protein sequence ID" value="AAO31763.1"/>
    <property type="status" value="JOINED"/>
    <property type="molecule type" value="Genomic_DNA"/>
</dbReference>
<dbReference type="EMBL" id="AY166986">
    <property type="protein sequence ID" value="AAO31763.1"/>
    <property type="status" value="JOINED"/>
    <property type="molecule type" value="Genomic_DNA"/>
</dbReference>
<dbReference type="EMBL" id="AY166987">
    <property type="protein sequence ID" value="AAO31763.1"/>
    <property type="status" value="JOINED"/>
    <property type="molecule type" value="Genomic_DNA"/>
</dbReference>
<dbReference type="EMBL" id="AY166988">
    <property type="protein sequence ID" value="AAO31763.1"/>
    <property type="status" value="JOINED"/>
    <property type="molecule type" value="Genomic_DNA"/>
</dbReference>
<dbReference type="EMBL" id="AY166989">
    <property type="protein sequence ID" value="AAO31763.1"/>
    <property type="status" value="JOINED"/>
    <property type="molecule type" value="Genomic_DNA"/>
</dbReference>
<dbReference type="EMBL" id="AY166990">
    <property type="protein sequence ID" value="AAO31763.1"/>
    <property type="status" value="JOINED"/>
    <property type="molecule type" value="Genomic_DNA"/>
</dbReference>
<dbReference type="EMBL" id="AY166991">
    <property type="protein sequence ID" value="AAO31763.1"/>
    <property type="status" value="JOINED"/>
    <property type="molecule type" value="Genomic_DNA"/>
</dbReference>
<dbReference type="EMBL" id="AY166992">
    <property type="protein sequence ID" value="AAO31763.1"/>
    <property type="status" value="JOINED"/>
    <property type="molecule type" value="Genomic_DNA"/>
</dbReference>
<dbReference type="EMBL" id="AY166993">
    <property type="protein sequence ID" value="AAO31763.1"/>
    <property type="status" value="JOINED"/>
    <property type="molecule type" value="Genomic_DNA"/>
</dbReference>
<dbReference type="EMBL" id="AY166994">
    <property type="protein sequence ID" value="AAO31763.1"/>
    <property type="status" value="JOINED"/>
    <property type="molecule type" value="Genomic_DNA"/>
</dbReference>
<dbReference type="EMBL" id="AY166995">
    <property type="protein sequence ID" value="AAO31763.1"/>
    <property type="status" value="JOINED"/>
    <property type="molecule type" value="Genomic_DNA"/>
</dbReference>
<dbReference type="EMBL" id="AY166996">
    <property type="protein sequence ID" value="AAO31763.1"/>
    <property type="status" value="JOINED"/>
    <property type="molecule type" value="Genomic_DNA"/>
</dbReference>
<dbReference type="EMBL" id="AY166997">
    <property type="protein sequence ID" value="AAO31763.1"/>
    <property type="status" value="JOINED"/>
    <property type="molecule type" value="Genomic_DNA"/>
</dbReference>
<dbReference type="EMBL" id="AY166998">
    <property type="protein sequence ID" value="AAO31763.1"/>
    <property type="status" value="JOINED"/>
    <property type="molecule type" value="Genomic_DNA"/>
</dbReference>
<dbReference type="EMBL" id="AY166999">
    <property type="protein sequence ID" value="AAO31763.1"/>
    <property type="status" value="JOINED"/>
    <property type="molecule type" value="Genomic_DNA"/>
</dbReference>
<dbReference type="EMBL" id="AY167000">
    <property type="protein sequence ID" value="AAO31763.1"/>
    <property type="status" value="JOINED"/>
    <property type="molecule type" value="Genomic_DNA"/>
</dbReference>
<dbReference type="EMBL" id="AY167001">
    <property type="protein sequence ID" value="AAO31763.1"/>
    <property type="status" value="JOINED"/>
    <property type="molecule type" value="Genomic_DNA"/>
</dbReference>
<dbReference type="EMBL" id="AY167002">
    <property type="protein sequence ID" value="AAO31763.1"/>
    <property type="status" value="JOINED"/>
    <property type="molecule type" value="Genomic_DNA"/>
</dbReference>
<dbReference type="EMBL" id="AY167003">
    <property type="protein sequence ID" value="AAO31763.1"/>
    <property type="status" value="JOINED"/>
    <property type="molecule type" value="Genomic_DNA"/>
</dbReference>
<dbReference type="EMBL" id="AY167004">
    <property type="protein sequence ID" value="AAO31763.1"/>
    <property type="status" value="JOINED"/>
    <property type="molecule type" value="Genomic_DNA"/>
</dbReference>
<dbReference type="EMBL" id="AY167005">
    <property type="protein sequence ID" value="AAO31763.1"/>
    <property type="status" value="JOINED"/>
    <property type="molecule type" value="Genomic_DNA"/>
</dbReference>
<dbReference type="EMBL" id="AY167006">
    <property type="protein sequence ID" value="AAO31763.1"/>
    <property type="status" value="JOINED"/>
    <property type="molecule type" value="Genomic_DNA"/>
</dbReference>
<dbReference type="EMBL" id="AF536523">
    <property type="protein sequence ID" value="AAN77181.1"/>
    <property type="molecule type" value="Genomic_DNA"/>
</dbReference>
<dbReference type="EMBL" id="AK302778">
    <property type="protein sequence ID" value="BAH13804.1"/>
    <property type="molecule type" value="mRNA"/>
</dbReference>
<dbReference type="EMBL" id="AC007970">
    <property type="status" value="NOT_ANNOTATED_CDS"/>
    <property type="molecule type" value="Genomic_DNA"/>
</dbReference>
<dbReference type="EMBL" id="AC008172">
    <property type="protein sequence ID" value="AAY14960.1"/>
    <property type="molecule type" value="Genomic_DNA"/>
</dbReference>
<dbReference type="EMBL" id="CH471063">
    <property type="protein sequence ID" value="EAW70492.1"/>
    <property type="molecule type" value="Genomic_DNA"/>
</dbReference>
<dbReference type="EMBL" id="BC140943">
    <property type="protein sequence ID" value="AAI40944.1"/>
    <property type="molecule type" value="mRNA"/>
</dbReference>
<dbReference type="EMBL" id="AB208800">
    <property type="protein sequence ID" value="BAD92037.1"/>
    <property type="status" value="ALT_INIT"/>
    <property type="molecule type" value="mRNA"/>
</dbReference>
<dbReference type="EMBL" id="BX640601">
    <property type="protein sequence ID" value="CAE45707.1"/>
    <property type="molecule type" value="mRNA"/>
</dbReference>
<dbReference type="CCDS" id="CCDS2393.1">
    <molecule id="P31327-1"/>
</dbReference>
<dbReference type="PIR" id="JQ1348">
    <property type="entry name" value="JQ1348"/>
</dbReference>
<dbReference type="RefSeq" id="NP_001116105.2">
    <molecule id="P31327-1"/>
    <property type="nucleotide sequence ID" value="NM_001122633.3"/>
</dbReference>
<dbReference type="RefSeq" id="NP_001116106.1">
    <property type="nucleotide sequence ID" value="NM_001122634.3"/>
</dbReference>
<dbReference type="RefSeq" id="NP_001356186.1">
    <molecule id="P31327-1"/>
    <property type="nucleotide sequence ID" value="NM_001369257.1"/>
</dbReference>
<dbReference type="RefSeq" id="NP_001866.2">
    <molecule id="P31327-1"/>
    <property type="nucleotide sequence ID" value="NM_001875.4"/>
</dbReference>
<dbReference type="RefSeq" id="XP_011508943.1">
    <property type="nucleotide sequence ID" value="XM_011510641.2"/>
</dbReference>
<dbReference type="RefSeq" id="XP_011508944.1">
    <property type="nucleotide sequence ID" value="XM_011510642.2"/>
</dbReference>
<dbReference type="RefSeq" id="XP_011508945.1">
    <property type="nucleotide sequence ID" value="XM_011510643.2"/>
</dbReference>
<dbReference type="RefSeq" id="XP_011508946.1">
    <property type="nucleotide sequence ID" value="XM_011510644.2"/>
</dbReference>
<dbReference type="PDB" id="2YVQ">
    <property type="method" value="X-ray"/>
    <property type="resolution" value="1.98 A"/>
    <property type="chains" value="A=1343-1478"/>
</dbReference>
<dbReference type="PDB" id="4UTR">
    <property type="method" value="X-ray"/>
    <property type="resolution" value="2.90 A"/>
    <property type="chains" value="C=524-531"/>
</dbReference>
<dbReference type="PDB" id="4UTV">
    <property type="method" value="X-ray"/>
    <property type="resolution" value="2.40 A"/>
    <property type="chains" value="C=524-531"/>
</dbReference>
<dbReference type="PDB" id="4UTX">
    <property type="method" value="X-ray"/>
    <property type="resolution" value="3.10 A"/>
    <property type="chains" value="C=524-531"/>
</dbReference>
<dbReference type="PDB" id="4UTZ">
    <property type="method" value="X-ray"/>
    <property type="resolution" value="3.30 A"/>
    <property type="chains" value="D=524-531"/>
</dbReference>
<dbReference type="PDB" id="4UU7">
    <property type="method" value="X-ray"/>
    <property type="resolution" value="3.00 A"/>
    <property type="chains" value="D=524-531"/>
</dbReference>
<dbReference type="PDB" id="4UU8">
    <property type="method" value="X-ray"/>
    <property type="resolution" value="2.90 A"/>
    <property type="chains" value="D=524-531"/>
</dbReference>
<dbReference type="PDB" id="4UUA">
    <property type="method" value="X-ray"/>
    <property type="resolution" value="2.80 A"/>
    <property type="chains" value="D=524-531"/>
</dbReference>
<dbReference type="PDB" id="4UUB">
    <property type="method" value="X-ray"/>
    <property type="resolution" value="2.90 A"/>
    <property type="chains" value="D=524-531"/>
</dbReference>
<dbReference type="PDB" id="5DOT">
    <property type="method" value="X-ray"/>
    <property type="resolution" value="2.40 A"/>
    <property type="chains" value="A/B=40-1500"/>
</dbReference>
<dbReference type="PDB" id="5DOU">
    <property type="method" value="X-ray"/>
    <property type="resolution" value="2.60 A"/>
    <property type="chains" value="A/B/C/D=40-1500"/>
</dbReference>
<dbReference type="PDB" id="5OJO">
    <property type="method" value="X-ray"/>
    <property type="resolution" value="3.10 A"/>
    <property type="chains" value="C=524-531"/>
</dbReference>
<dbReference type="PDB" id="6UEL">
    <property type="method" value="X-ray"/>
    <property type="resolution" value="1.90 A"/>
    <property type="chains" value="A/B=1-1500"/>
</dbReference>
<dbReference type="PDB" id="6W2J">
    <property type="method" value="X-ray"/>
    <property type="resolution" value="2.62 A"/>
    <property type="chains" value="A/B=1-1500"/>
</dbReference>
<dbReference type="PDBsum" id="2YVQ"/>
<dbReference type="PDBsum" id="4UTR"/>
<dbReference type="PDBsum" id="4UTV"/>
<dbReference type="PDBsum" id="4UTX"/>
<dbReference type="PDBsum" id="4UTZ"/>
<dbReference type="PDBsum" id="4UU7"/>
<dbReference type="PDBsum" id="4UU8"/>
<dbReference type="PDBsum" id="4UUA"/>
<dbReference type="PDBsum" id="4UUB"/>
<dbReference type="PDBsum" id="5DOT"/>
<dbReference type="PDBsum" id="5DOU"/>
<dbReference type="PDBsum" id="5OJO"/>
<dbReference type="PDBsum" id="6UEL"/>
<dbReference type="PDBsum" id="6W2J"/>
<dbReference type="SMR" id="P31327"/>
<dbReference type="BioGRID" id="107764">
    <property type="interactions" value="205"/>
</dbReference>
<dbReference type="CORUM" id="P31327"/>
<dbReference type="FunCoup" id="P31327">
    <property type="interactions" value="622"/>
</dbReference>
<dbReference type="IntAct" id="P31327">
    <property type="interactions" value="87"/>
</dbReference>
<dbReference type="MINT" id="P31327"/>
<dbReference type="STRING" id="9606.ENSP00000402608"/>
<dbReference type="BindingDB" id="P31327"/>
<dbReference type="ChEMBL" id="CHEMBL2362990"/>
<dbReference type="DrugBank" id="DB11118">
    <property type="generic name" value="Ammonia"/>
</dbReference>
<dbReference type="DrugBank" id="DB06775">
    <property type="generic name" value="Carglumic acid"/>
</dbReference>
<dbReference type="DrugCentral" id="P31327"/>
<dbReference type="MEROPS" id="C26.951"/>
<dbReference type="GlyCosmos" id="P31327">
    <property type="glycosylation" value="3 sites, No reported glycans"/>
</dbReference>
<dbReference type="GlyGen" id="P31327">
    <property type="glycosylation" value="7 sites, 4 N-linked glycans (3 sites), 1 O-linked glycan (2 sites)"/>
</dbReference>
<dbReference type="iPTMnet" id="P31327"/>
<dbReference type="MetOSite" id="P31327"/>
<dbReference type="PhosphoSitePlus" id="P31327"/>
<dbReference type="SwissPalm" id="P31327"/>
<dbReference type="BioMuta" id="CPS1"/>
<dbReference type="DMDM" id="4033707"/>
<dbReference type="jPOST" id="P31327"/>
<dbReference type="MassIVE" id="P31327"/>
<dbReference type="PaxDb" id="9606-ENSP00000402608"/>
<dbReference type="PeptideAtlas" id="P31327"/>
<dbReference type="ProteomicsDB" id="54782">
    <molecule id="P31327-1"/>
</dbReference>
<dbReference type="ProteomicsDB" id="54783">
    <molecule id="P31327-2"/>
</dbReference>
<dbReference type="Pumba" id="P31327"/>
<dbReference type="Antibodypedia" id="20025">
    <property type="antibodies" value="513 antibodies from 33 providers"/>
</dbReference>
<dbReference type="DNASU" id="1373"/>
<dbReference type="Ensembl" id="ENST00000233072.10">
    <molecule id="P31327-1"/>
    <property type="protein sequence ID" value="ENSP00000233072.5"/>
    <property type="gene ID" value="ENSG00000021826.18"/>
</dbReference>
<dbReference type="Ensembl" id="ENST00000430249.7">
    <molecule id="P31327-3"/>
    <property type="protein sequence ID" value="ENSP00000402608.2"/>
    <property type="gene ID" value="ENSG00000021826.18"/>
</dbReference>
<dbReference type="Ensembl" id="ENST00000451903.3">
    <molecule id="P31327-2"/>
    <property type="protein sequence ID" value="ENSP00000406136.2"/>
    <property type="gene ID" value="ENSG00000021826.18"/>
</dbReference>
<dbReference type="Ensembl" id="ENST00000673510.1">
    <molecule id="P31327-1"/>
    <property type="protein sequence ID" value="ENSP00000500537.1"/>
    <property type="gene ID" value="ENSG00000021826.18"/>
</dbReference>
<dbReference type="Ensembl" id="ENST00000673630.1">
    <molecule id="P31327-1"/>
    <property type="protein sequence ID" value="ENSP00000501073.1"/>
    <property type="gene ID" value="ENSG00000021826.18"/>
</dbReference>
<dbReference type="Ensembl" id="ENST00000673711.1">
    <molecule id="P31327-1"/>
    <property type="protein sequence ID" value="ENSP00000501022.1"/>
    <property type="gene ID" value="ENSG00000021826.18"/>
</dbReference>
<dbReference type="GeneID" id="1373"/>
<dbReference type="KEGG" id="hsa:1373"/>
<dbReference type="MANE-Select" id="ENST00000233072.10">
    <property type="protein sequence ID" value="ENSP00000233072.5"/>
    <property type="RefSeq nucleotide sequence ID" value="NM_001875.5"/>
    <property type="RefSeq protein sequence ID" value="NP_001866.2"/>
</dbReference>
<dbReference type="UCSC" id="uc002vee.5">
    <molecule id="P31327-1"/>
    <property type="organism name" value="human"/>
</dbReference>
<dbReference type="AGR" id="HGNC:2323"/>
<dbReference type="CTD" id="1373"/>
<dbReference type="DisGeNET" id="1373"/>
<dbReference type="GeneCards" id="CPS1"/>
<dbReference type="GeneReviews" id="CPS1"/>
<dbReference type="HGNC" id="HGNC:2323">
    <property type="gene designation" value="CPS1"/>
</dbReference>
<dbReference type="HPA" id="ENSG00000021826">
    <property type="expression patterns" value="Tissue enriched (liver)"/>
</dbReference>
<dbReference type="MalaCards" id="CPS1"/>
<dbReference type="MIM" id="237300">
    <property type="type" value="phenotype"/>
</dbReference>
<dbReference type="MIM" id="608307">
    <property type="type" value="gene"/>
</dbReference>
<dbReference type="neXtProt" id="NX_P31327"/>
<dbReference type="OpenTargets" id="ENSG00000021826"/>
<dbReference type="Orphanet" id="147">
    <property type="disease" value="Carbamoyl-phosphate synthetase 1 deficiency"/>
</dbReference>
<dbReference type="PharmGKB" id="PA26840"/>
<dbReference type="VEuPathDB" id="HostDB:ENSG00000021826"/>
<dbReference type="eggNOG" id="KOG0370">
    <property type="taxonomic scope" value="Eukaryota"/>
</dbReference>
<dbReference type="GeneTree" id="ENSGT00940000157192"/>
<dbReference type="HOGENOM" id="CLU_000513_0_1_1"/>
<dbReference type="InParanoid" id="P31327"/>
<dbReference type="OMA" id="FPFNKFP"/>
<dbReference type="OrthoDB" id="434at2759"/>
<dbReference type="PAN-GO" id="P31327">
    <property type="GO annotations" value="2 GO annotations based on evolutionary models"/>
</dbReference>
<dbReference type="PhylomeDB" id="P31327"/>
<dbReference type="TreeFam" id="TF331485"/>
<dbReference type="BioCyc" id="MetaCyc:HS00415-MONOMER"/>
<dbReference type="BRENDA" id="6.3.4.16">
    <property type="organism ID" value="2681"/>
</dbReference>
<dbReference type="PathwayCommons" id="P31327"/>
<dbReference type="Reactome" id="R-HSA-70635">
    <property type="pathway name" value="Urea cycle"/>
</dbReference>
<dbReference type="SABIO-RK" id="P31327"/>
<dbReference type="SignaLink" id="P31327"/>
<dbReference type="SIGNOR" id="P31327"/>
<dbReference type="BioGRID-ORCS" id="1373">
    <property type="hits" value="20 hits in 1176 CRISPR screens"/>
</dbReference>
<dbReference type="CD-CODE" id="91857CE7">
    <property type="entry name" value="Nucleolus"/>
</dbReference>
<dbReference type="ChiTaRS" id="CPS1">
    <property type="organism name" value="human"/>
</dbReference>
<dbReference type="EvolutionaryTrace" id="P31327"/>
<dbReference type="GenomeRNAi" id="1373"/>
<dbReference type="Pharos" id="P31327">
    <property type="development level" value="Tclin"/>
</dbReference>
<dbReference type="PRO" id="PR:P31327"/>
<dbReference type="Proteomes" id="UP000005640">
    <property type="component" value="Chromosome 2"/>
</dbReference>
<dbReference type="RNAct" id="P31327">
    <property type="molecule type" value="protein"/>
</dbReference>
<dbReference type="Bgee" id="ENSG00000021826">
    <property type="expression patterns" value="Expressed in liver and 146 other cell types or tissues"/>
</dbReference>
<dbReference type="ExpressionAtlas" id="P31327">
    <property type="expression patterns" value="baseline and differential"/>
</dbReference>
<dbReference type="GO" id="GO:0005737">
    <property type="term" value="C:cytoplasm"/>
    <property type="evidence" value="ECO:0000318"/>
    <property type="project" value="GO_Central"/>
</dbReference>
<dbReference type="GO" id="GO:0005743">
    <property type="term" value="C:mitochondrial inner membrane"/>
    <property type="evidence" value="ECO:0007669"/>
    <property type="project" value="Ensembl"/>
</dbReference>
<dbReference type="GO" id="GO:0005759">
    <property type="term" value="C:mitochondrial matrix"/>
    <property type="evidence" value="ECO:0000304"/>
    <property type="project" value="Reactome"/>
</dbReference>
<dbReference type="GO" id="GO:0042645">
    <property type="term" value="C:mitochondrial nucleoid"/>
    <property type="evidence" value="ECO:0000314"/>
    <property type="project" value="BHF-UCL"/>
</dbReference>
<dbReference type="GO" id="GO:0005739">
    <property type="term" value="C:mitochondrion"/>
    <property type="evidence" value="ECO:0006056"/>
    <property type="project" value="FlyBase"/>
</dbReference>
<dbReference type="GO" id="GO:0005730">
    <property type="term" value="C:nucleolus"/>
    <property type="evidence" value="ECO:0000314"/>
    <property type="project" value="HPA"/>
</dbReference>
<dbReference type="GO" id="GO:0005886">
    <property type="term" value="C:plasma membrane"/>
    <property type="evidence" value="ECO:0007669"/>
    <property type="project" value="UniProtKB-SubCell"/>
</dbReference>
<dbReference type="GO" id="GO:0032991">
    <property type="term" value="C:protein-containing complex"/>
    <property type="evidence" value="ECO:0007669"/>
    <property type="project" value="Ensembl"/>
</dbReference>
<dbReference type="GO" id="GO:0005524">
    <property type="term" value="F:ATP binding"/>
    <property type="evidence" value="ECO:0007669"/>
    <property type="project" value="UniProtKB-KW"/>
</dbReference>
<dbReference type="GO" id="GO:0005509">
    <property type="term" value="F:calcium ion binding"/>
    <property type="evidence" value="ECO:0007669"/>
    <property type="project" value="Ensembl"/>
</dbReference>
<dbReference type="GO" id="GO:0004087">
    <property type="term" value="F:carbamoyl-phosphate synthase (ammonia) activity"/>
    <property type="evidence" value="ECO:0000315"/>
    <property type="project" value="BHF-UCL"/>
</dbReference>
<dbReference type="GO" id="GO:0004088">
    <property type="term" value="F:carbamoyl-phosphate synthase (glutamine-hydrolyzing) activity"/>
    <property type="evidence" value="ECO:0007669"/>
    <property type="project" value="InterPro"/>
</dbReference>
<dbReference type="GO" id="GO:0004175">
    <property type="term" value="F:endopeptidase activity"/>
    <property type="evidence" value="ECO:0007669"/>
    <property type="project" value="Ensembl"/>
</dbReference>
<dbReference type="GO" id="GO:0016595">
    <property type="term" value="F:glutamate binding"/>
    <property type="evidence" value="ECO:0007669"/>
    <property type="project" value="Ensembl"/>
</dbReference>
<dbReference type="GO" id="GO:0046872">
    <property type="term" value="F:metal ion binding"/>
    <property type="evidence" value="ECO:0000269"/>
    <property type="project" value="DisProt"/>
</dbReference>
<dbReference type="GO" id="GO:0072341">
    <property type="term" value="F:modified amino acid binding"/>
    <property type="evidence" value="ECO:0000314"/>
    <property type="project" value="UniProtKB"/>
</dbReference>
<dbReference type="GO" id="GO:0005543">
    <property type="term" value="F:phospholipid binding"/>
    <property type="evidence" value="ECO:0007669"/>
    <property type="project" value="Ensembl"/>
</dbReference>
<dbReference type="GO" id="GO:0030955">
    <property type="term" value="F:potassium ion binding"/>
    <property type="evidence" value="ECO:0000269"/>
    <property type="project" value="DisProt"/>
</dbReference>
<dbReference type="GO" id="GO:0044877">
    <property type="term" value="F:protein-containing complex binding"/>
    <property type="evidence" value="ECO:0007669"/>
    <property type="project" value="Ensembl"/>
</dbReference>
<dbReference type="GO" id="GO:0036094">
    <property type="term" value="F:small molecule binding"/>
    <property type="evidence" value="ECO:0000269"/>
    <property type="project" value="DisProt"/>
</dbReference>
<dbReference type="GO" id="GO:0006207">
    <property type="term" value="P:'de novo' pyrimidine nucleobase biosynthetic process"/>
    <property type="evidence" value="ECO:0007669"/>
    <property type="project" value="InterPro"/>
</dbReference>
<dbReference type="GO" id="GO:0070409">
    <property type="term" value="P:carbamoyl phosphate biosynthetic process"/>
    <property type="evidence" value="ECO:0000315"/>
    <property type="project" value="UniProtKB"/>
</dbReference>
<dbReference type="GO" id="GO:0071242">
    <property type="term" value="P:cellular response to ammonium ion"/>
    <property type="evidence" value="ECO:0000315"/>
    <property type="project" value="BHF-UCL"/>
</dbReference>
<dbReference type="GO" id="GO:0071320">
    <property type="term" value="P:cellular response to cAMP"/>
    <property type="evidence" value="ECO:0007669"/>
    <property type="project" value="Ensembl"/>
</dbReference>
<dbReference type="GO" id="GO:0044344">
    <property type="term" value="P:cellular response to fibroblast growth factor stimulus"/>
    <property type="evidence" value="ECO:0007669"/>
    <property type="project" value="Ensembl"/>
</dbReference>
<dbReference type="GO" id="GO:0071377">
    <property type="term" value="P:cellular response to glucagon stimulus"/>
    <property type="evidence" value="ECO:0007669"/>
    <property type="project" value="Ensembl"/>
</dbReference>
<dbReference type="GO" id="GO:0071400">
    <property type="term" value="P:cellular response to oleic acid"/>
    <property type="evidence" value="ECO:0007669"/>
    <property type="project" value="Ensembl"/>
</dbReference>
<dbReference type="GO" id="GO:0019240">
    <property type="term" value="P:citrulline biosynthetic process"/>
    <property type="evidence" value="ECO:0000303"/>
    <property type="project" value="BHF-UCL"/>
</dbReference>
<dbReference type="GO" id="GO:0006541">
    <property type="term" value="P:glutamine metabolic process"/>
    <property type="evidence" value="ECO:0000318"/>
    <property type="project" value="GO_Central"/>
</dbReference>
<dbReference type="GO" id="GO:0070365">
    <property type="term" value="P:hepatocyte differentiation"/>
    <property type="evidence" value="ECO:0007669"/>
    <property type="project" value="Ensembl"/>
</dbReference>
<dbReference type="GO" id="GO:0050667">
    <property type="term" value="P:homocysteine metabolic process"/>
    <property type="evidence" value="ECO:0000314"/>
    <property type="project" value="UniProtKB"/>
</dbReference>
<dbReference type="GO" id="GO:0007494">
    <property type="term" value="P:midgut development"/>
    <property type="evidence" value="ECO:0007669"/>
    <property type="project" value="Ensembl"/>
</dbReference>
<dbReference type="GO" id="GO:0055081">
    <property type="term" value="P:monoatomic anion homeostasis"/>
    <property type="evidence" value="ECO:0007669"/>
    <property type="project" value="Ensembl"/>
</dbReference>
<dbReference type="GO" id="GO:0046209">
    <property type="term" value="P:nitric oxide metabolic process"/>
    <property type="evidence" value="ECO:0000315"/>
    <property type="project" value="BHF-UCL"/>
</dbReference>
<dbReference type="GO" id="GO:0014075">
    <property type="term" value="P:response to amine"/>
    <property type="evidence" value="ECO:0007669"/>
    <property type="project" value="Ensembl"/>
</dbReference>
<dbReference type="GO" id="GO:0043200">
    <property type="term" value="P:response to amino acid"/>
    <property type="evidence" value="ECO:0007669"/>
    <property type="project" value="Ensembl"/>
</dbReference>
<dbReference type="GO" id="GO:0071548">
    <property type="term" value="P:response to dexamethasone"/>
    <property type="evidence" value="ECO:0007669"/>
    <property type="project" value="Ensembl"/>
</dbReference>
<dbReference type="GO" id="GO:0032094">
    <property type="term" value="P:response to food"/>
    <property type="evidence" value="ECO:0007669"/>
    <property type="project" value="Ensembl"/>
</dbReference>
<dbReference type="GO" id="GO:0060416">
    <property type="term" value="P:response to growth hormone"/>
    <property type="evidence" value="ECO:0007669"/>
    <property type="project" value="Ensembl"/>
</dbReference>
<dbReference type="GO" id="GO:0032496">
    <property type="term" value="P:response to lipopolysaccharide"/>
    <property type="evidence" value="ECO:0000314"/>
    <property type="project" value="UniProtKB"/>
</dbReference>
<dbReference type="GO" id="GO:0042594">
    <property type="term" value="P:response to starvation"/>
    <property type="evidence" value="ECO:0007669"/>
    <property type="project" value="Ensembl"/>
</dbReference>
<dbReference type="GO" id="GO:0009636">
    <property type="term" value="P:response to toxic substance"/>
    <property type="evidence" value="ECO:0007669"/>
    <property type="project" value="Ensembl"/>
</dbReference>
<dbReference type="GO" id="GO:0009410">
    <property type="term" value="P:response to xenobiotic stimulus"/>
    <property type="evidence" value="ECO:0007669"/>
    <property type="project" value="Ensembl"/>
</dbReference>
<dbReference type="GO" id="GO:0010043">
    <property type="term" value="P:response to zinc ion"/>
    <property type="evidence" value="ECO:0007669"/>
    <property type="project" value="Ensembl"/>
</dbReference>
<dbReference type="GO" id="GO:0019433">
    <property type="term" value="P:triglyceride catabolic process"/>
    <property type="evidence" value="ECO:0000315"/>
    <property type="project" value="BHF-UCL"/>
</dbReference>
<dbReference type="GO" id="GO:0000050">
    <property type="term" value="P:urea cycle"/>
    <property type="evidence" value="ECO:0000304"/>
    <property type="project" value="Reactome"/>
</dbReference>
<dbReference type="GO" id="GO:0042311">
    <property type="term" value="P:vasodilation"/>
    <property type="evidence" value="ECO:0000315"/>
    <property type="project" value="BHF-UCL"/>
</dbReference>
<dbReference type="CDD" id="cd01744">
    <property type="entry name" value="GATase1_CPSase"/>
    <property type="match status" value="1"/>
</dbReference>
<dbReference type="CDD" id="cd01423">
    <property type="entry name" value="MGS_CPS_I_III"/>
    <property type="match status" value="1"/>
</dbReference>
<dbReference type="FunFam" id="3.30.470.20:FF:000030">
    <property type="entry name" value="Carbamoyl-phosphate synthase 1, mitochondrial"/>
    <property type="match status" value="1"/>
</dbReference>
<dbReference type="FunFam" id="3.40.50.20:FF:000012">
    <property type="entry name" value="Carbamoyl-phosphate synthase 1, mitochondrial"/>
    <property type="match status" value="1"/>
</dbReference>
<dbReference type="FunFam" id="3.40.50.880:FF:000006">
    <property type="entry name" value="Carbamoyl-phosphate synthase 1, mitochondrial"/>
    <property type="match status" value="1"/>
</dbReference>
<dbReference type="FunFam" id="3.50.30.20:FF:000002">
    <property type="entry name" value="Carbamoyl-phosphate synthase 1, mitochondrial"/>
    <property type="match status" value="1"/>
</dbReference>
<dbReference type="FunFam" id="3.40.50.1380:FF:000010">
    <property type="entry name" value="carbamoyl-phosphate synthase [ammonia], mitochondrial"/>
    <property type="match status" value="1"/>
</dbReference>
<dbReference type="FunFam" id="1.10.1030.10:FF:000001">
    <property type="entry name" value="Carbamoyl-phosphate synthase large chain"/>
    <property type="match status" value="1"/>
</dbReference>
<dbReference type="FunFam" id="3.30.1490.20:FF:000001">
    <property type="entry name" value="Carbamoyl-phosphate synthase large chain"/>
    <property type="match status" value="1"/>
</dbReference>
<dbReference type="FunFam" id="3.30.470.20:FF:000001">
    <property type="entry name" value="Carbamoyl-phosphate synthase large chain"/>
    <property type="match status" value="1"/>
</dbReference>
<dbReference type="FunFam" id="3.40.50.20:FF:000002">
    <property type="entry name" value="Carbamoyl-phosphate synthase large chain"/>
    <property type="match status" value="1"/>
</dbReference>
<dbReference type="Gene3D" id="3.40.50.20">
    <property type="match status" value="2"/>
</dbReference>
<dbReference type="Gene3D" id="3.40.50.880">
    <property type="match status" value="1"/>
</dbReference>
<dbReference type="Gene3D" id="3.30.1490.20">
    <property type="entry name" value="ATP-grasp fold, A domain"/>
    <property type="match status" value="1"/>
</dbReference>
<dbReference type="Gene3D" id="3.30.470.20">
    <property type="entry name" value="ATP-grasp fold, B domain"/>
    <property type="match status" value="2"/>
</dbReference>
<dbReference type="Gene3D" id="3.50.30.20">
    <property type="entry name" value="Carbamoyl-phosphate synthase small subunit, N-terminal domain"/>
    <property type="match status" value="1"/>
</dbReference>
<dbReference type="Gene3D" id="1.10.1030.10">
    <property type="entry name" value="Carbamoyl-phosphate synthetase, large subunit oligomerisation domain"/>
    <property type="match status" value="1"/>
</dbReference>
<dbReference type="Gene3D" id="3.40.50.1380">
    <property type="entry name" value="Methylglyoxal synthase-like domain"/>
    <property type="match status" value="1"/>
</dbReference>
<dbReference type="HAMAP" id="MF_01209">
    <property type="entry name" value="CPSase_S_chain"/>
    <property type="match status" value="1"/>
</dbReference>
<dbReference type="InterPro" id="IPR011761">
    <property type="entry name" value="ATP-grasp"/>
</dbReference>
<dbReference type="InterPro" id="IPR013815">
    <property type="entry name" value="ATP_grasp_subdomain_1"/>
</dbReference>
<dbReference type="InterPro" id="IPR006275">
    <property type="entry name" value="CarbamoylP_synth_lsu"/>
</dbReference>
<dbReference type="InterPro" id="IPR005480">
    <property type="entry name" value="CarbamoylP_synth_lsu_oligo"/>
</dbReference>
<dbReference type="InterPro" id="IPR036897">
    <property type="entry name" value="CarbamoylP_synth_lsu_oligo_sf"/>
</dbReference>
<dbReference type="InterPro" id="IPR006274">
    <property type="entry name" value="CarbamoylP_synth_ssu"/>
</dbReference>
<dbReference type="InterPro" id="IPR002474">
    <property type="entry name" value="CarbamoylP_synth_ssu_N"/>
</dbReference>
<dbReference type="InterPro" id="IPR036480">
    <property type="entry name" value="CarbP_synth_ssu_N_sf"/>
</dbReference>
<dbReference type="InterPro" id="IPR005479">
    <property type="entry name" value="CbamoylP_synth_lsu-like_ATP-bd"/>
</dbReference>
<dbReference type="InterPro" id="IPR005483">
    <property type="entry name" value="CbamoylP_synth_lsu_CPSase_dom"/>
</dbReference>
<dbReference type="InterPro" id="IPR029062">
    <property type="entry name" value="Class_I_gatase-like"/>
</dbReference>
<dbReference type="InterPro" id="IPR035686">
    <property type="entry name" value="CPSase_GATase1"/>
</dbReference>
<dbReference type="InterPro" id="IPR017926">
    <property type="entry name" value="GATASE"/>
</dbReference>
<dbReference type="InterPro" id="IPR011607">
    <property type="entry name" value="MGS-like_dom"/>
</dbReference>
<dbReference type="InterPro" id="IPR036914">
    <property type="entry name" value="MGS-like_dom_sf"/>
</dbReference>
<dbReference type="InterPro" id="IPR016185">
    <property type="entry name" value="PreATP-grasp_dom_sf"/>
</dbReference>
<dbReference type="NCBIfam" id="TIGR01369">
    <property type="entry name" value="CPSaseII_lrg"/>
    <property type="match status" value="1"/>
</dbReference>
<dbReference type="NCBIfam" id="TIGR01368">
    <property type="entry name" value="CPSaseIIsmall"/>
    <property type="match status" value="1"/>
</dbReference>
<dbReference type="NCBIfam" id="NF003671">
    <property type="entry name" value="PRK05294.1"/>
    <property type="match status" value="1"/>
</dbReference>
<dbReference type="NCBIfam" id="NF009455">
    <property type="entry name" value="PRK12815.1"/>
    <property type="match status" value="1"/>
</dbReference>
<dbReference type="NCBIfam" id="NF009475">
    <property type="entry name" value="PRK12838.1"/>
    <property type="match status" value="1"/>
</dbReference>
<dbReference type="PANTHER" id="PTHR11405:SF53">
    <property type="entry name" value="CARBAMOYL-PHOSPHATE SYNTHASE [AMMONIA], MITOCHONDRIAL"/>
    <property type="match status" value="1"/>
</dbReference>
<dbReference type="PANTHER" id="PTHR11405">
    <property type="entry name" value="CARBAMOYLTRANSFERASE FAMILY MEMBER"/>
    <property type="match status" value="1"/>
</dbReference>
<dbReference type="Pfam" id="PF02786">
    <property type="entry name" value="CPSase_L_D2"/>
    <property type="match status" value="2"/>
</dbReference>
<dbReference type="Pfam" id="PF02787">
    <property type="entry name" value="CPSase_L_D3"/>
    <property type="match status" value="1"/>
</dbReference>
<dbReference type="Pfam" id="PF00988">
    <property type="entry name" value="CPSase_sm_chain"/>
    <property type="match status" value="1"/>
</dbReference>
<dbReference type="Pfam" id="PF00117">
    <property type="entry name" value="GATase"/>
    <property type="match status" value="1"/>
</dbReference>
<dbReference type="Pfam" id="PF02142">
    <property type="entry name" value="MGS"/>
    <property type="match status" value="1"/>
</dbReference>
<dbReference type="PRINTS" id="PR00098">
    <property type="entry name" value="CPSASE"/>
</dbReference>
<dbReference type="PRINTS" id="PR00099">
    <property type="entry name" value="CPSGATASE"/>
</dbReference>
<dbReference type="SMART" id="SM01096">
    <property type="entry name" value="CPSase_L_D3"/>
    <property type="match status" value="1"/>
</dbReference>
<dbReference type="SMART" id="SM01097">
    <property type="entry name" value="CPSase_sm_chain"/>
    <property type="match status" value="1"/>
</dbReference>
<dbReference type="SMART" id="SM00851">
    <property type="entry name" value="MGS"/>
    <property type="match status" value="1"/>
</dbReference>
<dbReference type="SUPFAM" id="SSF48108">
    <property type="entry name" value="Carbamoyl phosphate synthetase, large subunit connection domain"/>
    <property type="match status" value="1"/>
</dbReference>
<dbReference type="SUPFAM" id="SSF52021">
    <property type="entry name" value="Carbamoyl phosphate synthetase, small subunit N-terminal domain"/>
    <property type="match status" value="1"/>
</dbReference>
<dbReference type="SUPFAM" id="SSF52317">
    <property type="entry name" value="Class I glutamine amidotransferase-like"/>
    <property type="match status" value="1"/>
</dbReference>
<dbReference type="SUPFAM" id="SSF56059">
    <property type="entry name" value="Glutathione synthetase ATP-binding domain-like"/>
    <property type="match status" value="2"/>
</dbReference>
<dbReference type="SUPFAM" id="SSF52335">
    <property type="entry name" value="Methylglyoxal synthase-like"/>
    <property type="match status" value="1"/>
</dbReference>
<dbReference type="SUPFAM" id="SSF52440">
    <property type="entry name" value="PreATP-grasp domain"/>
    <property type="match status" value="2"/>
</dbReference>
<dbReference type="PROSITE" id="PS50975">
    <property type="entry name" value="ATP_GRASP"/>
    <property type="match status" value="2"/>
</dbReference>
<dbReference type="PROSITE" id="PS00866">
    <property type="entry name" value="CPSASE_1"/>
    <property type="match status" value="2"/>
</dbReference>
<dbReference type="PROSITE" id="PS00867">
    <property type="entry name" value="CPSASE_2"/>
    <property type="match status" value="2"/>
</dbReference>
<dbReference type="PROSITE" id="PS51273">
    <property type="entry name" value="GATASE_TYPE_1"/>
    <property type="match status" value="1"/>
</dbReference>
<dbReference type="PROSITE" id="PS51855">
    <property type="entry name" value="MGS"/>
    <property type="match status" value="1"/>
</dbReference>
<name>CPSM_HUMAN</name>
<protein>
    <recommendedName>
        <fullName>Carbamoyl-phosphate synthase [ammonia], mitochondrial</fullName>
        <ecNumber evidence="23 26">6.3.4.16</ecNumber>
    </recommendedName>
    <alternativeName>
        <fullName>Carbamoyl-phosphate synthetase I</fullName>
        <shortName>CPSase I</shortName>
    </alternativeName>
</protein>
<accession>P31327</accession>
<accession>B7Z818</accession>
<accession>J3KQL0</accession>
<accession>O43774</accession>
<accession>Q53TL5</accession>
<accession>Q59HF8</accession>
<accession>Q7Z5I5</accession>
<comment type="function">
    <text>Involved in the urea cycle of ureotelic animals where the enzyme plays an important role in removing excess ammonia from the cell.</text>
</comment>
<comment type="catalytic activity">
    <reaction evidence="23 26">
        <text>hydrogencarbonate + NH4(+) + 2 ATP = carbamoyl phosphate + 2 ADP + phosphate + 2 H(+)</text>
        <dbReference type="Rhea" id="RHEA:18029"/>
        <dbReference type="ChEBI" id="CHEBI:15378"/>
        <dbReference type="ChEBI" id="CHEBI:17544"/>
        <dbReference type="ChEBI" id="CHEBI:28938"/>
        <dbReference type="ChEBI" id="CHEBI:30616"/>
        <dbReference type="ChEBI" id="CHEBI:43474"/>
        <dbReference type="ChEBI" id="CHEBI:58228"/>
        <dbReference type="ChEBI" id="CHEBI:456216"/>
        <dbReference type="EC" id="6.3.4.16"/>
    </reaction>
</comment>
<comment type="activity regulation">
    <text evidence="16 23">Requires N-acetyl-L-glutamate (NAG) as an allosteric activator. Activated by glycerol in the absence of NAG, whereas in the presence of NAG it is inhibited by increasing concentrations of glycerol.</text>
</comment>
<comment type="biophysicochemical properties">
    <kinetics>
        <KM evidence="23">0.47 mM for ATP</KM>
        <KM evidence="23">4 mM for HCO(3)(-)</KM>
        <KM evidence="23">1 mM for NH(4)(+)</KM>
        <Vmax evidence="23">1.22 umol/min/mg enzyme for ATP</Vmax>
        <Vmax evidence="23">1.23 umol/min/mg enzyme for HCO(3)(-)</Vmax>
        <Vmax evidence="23">1.19 umol/min/mg enzyme for NH(4)(+)</Vmax>
    </kinetics>
</comment>
<comment type="subunit">
    <text evidence="23">Can form homooligomers (monomers as predominant form and dimers).</text>
</comment>
<comment type="interaction">
    <interactant intactId="EBI-536811">
        <id>P31327</id>
    </interactant>
    <interactant intactId="EBI-365961">
        <id>P10398</id>
        <label>ARAF</label>
    </interactant>
    <organismsDiffer>false</organismsDiffer>
    <experiments>3</experiments>
</comment>
<comment type="interaction">
    <interactant intactId="EBI-536811">
        <id>P31327</id>
    </interactant>
    <interactant intactId="EBI-365996">
        <id>P04049</id>
        <label>RAF1</label>
    </interactant>
    <organismsDiffer>false</organismsDiffer>
    <experiments>4</experiments>
</comment>
<comment type="interaction">
    <interactant intactId="EBI-536811">
        <id>P31327</id>
    </interactant>
    <interactant intactId="EBI-347088">
        <id>P63104</id>
        <label>YWHAZ</label>
    </interactant>
    <organismsDiffer>false</organismsDiffer>
    <experiments>2</experiments>
</comment>
<comment type="subcellular location">
    <subcellularLocation>
        <location evidence="21">Mitochondrion</location>
    </subcellularLocation>
    <subcellularLocation>
        <location evidence="21">Nucleus</location>
        <location evidence="21">Nucleolus</location>
    </subcellularLocation>
    <subcellularLocation>
        <location evidence="3">Cell membrane</location>
        <topology evidence="34">Peripheral membrane protein</topology>
        <orientation evidence="3">Extracellular side</orientation>
    </subcellularLocation>
    <text evidence="3">Localizes to the cell surface of hepatocytes.</text>
</comment>
<comment type="alternative products">
    <event type="alternative splicing"/>
    <isoform>
        <id>P31327-1</id>
        <name>1</name>
        <sequence type="displayed"/>
    </isoform>
    <isoform>
        <id>P31327-2</id>
        <name>2</name>
        <sequence type="described" ref="VSP_009332"/>
    </isoform>
    <isoform>
        <id>P31327-3</id>
        <name>3</name>
        <sequence type="described" ref="VSP_046685"/>
    </isoform>
</comment>
<comment type="tissue specificity">
    <text>Primarily in the liver and small intestine.</text>
</comment>
<comment type="domain">
    <text>The type-1 glutamine amidotransferase domain is defective.</text>
</comment>
<comment type="PTM">
    <text evidence="23">Undergoes proteolytic cleavage in the C-terminal region corresponding to the loss of approximately 12 AA residues from the C-terminus.</text>
</comment>
<comment type="PTM">
    <text evidence="3">Succinylated at Lys-287 and Lys-1291. Desuccinylated at Lys-1291 by SIRT5, leading to activation (By similarity).</text>
</comment>
<comment type="PTM">
    <text evidence="25">Glutarylated. Glutarylation levels increase during fasting. Deglutarylated by SIRT5 at Lys-55, Lys-219, Lys-412, Lys-889, Lys-892, Lys-915, Lys-1360 and Lys-1486, leading to activation.</text>
</comment>
<comment type="disease" evidence="5 7 8 10 11 12 13 14 18 19 22 23 26 27 29">
    <disease id="DI-00209">
        <name>Carbamoyl phosphate synthetase 1 deficiency</name>
        <acronym>CPS1D</acronym>
        <description>An autosomal recessive disorder of the urea cycle causing hyperammonemia. It can present as a devastating metabolic disease dominated by severe hyperammonemia in neonates or as a more insidious late-onset condition, generally manifesting as life-threatening hyperammonemic crises under catabolic situations. Clinical features include protein intolerance, intermittent ataxia, seizures, lethargy, developmental delay and intellectual disability.</description>
        <dbReference type="MIM" id="237300"/>
    </disease>
    <text>The disease is caused by variants affecting the gene represented in this entry.</text>
</comment>
<comment type="disease">
    <text evidence="6">CPS1 protein variants might influence the availability of precursors for nitric oxide (NO) synthesis and play a role in clinical situations where endogenous NO production is critically important, such as neonatal pulmonary hypertension, increased pulmonary artery pressure following surgical repair of congenital heart defects or hepatovenocclusive disease following bone marrow transplantation (PubMed:11407344).</text>
</comment>
<comment type="sequence caution" evidence="34">
    <conflict type="erroneous initiation">
        <sequence resource="EMBL-CDS" id="BAD92037"/>
    </conflict>
    <text>Extended N-terminus.</text>
</comment>
<comment type="online information" name="LOVD-Leiden Open Variation Database">
    <link uri="https://databases.lovd.nl/shared/genes/CPS1"/>
    <text>Carbamoyl-Phosphate Synthetase 1 (CPS1)</text>
</comment>
<feature type="transit peptide" description="Mitochondrion" evidence="1">
    <location>
        <begin position="1"/>
        <end position="38"/>
    </location>
</feature>
<feature type="chain" id="PRO_0000029897" description="Carbamoyl-phosphate synthase [ammonia], mitochondrial">
    <location>
        <begin position="39"/>
        <end position="1500"/>
    </location>
</feature>
<feature type="domain" description="Glutamine amidotransferase type-1">
    <location>
        <begin position="219"/>
        <end position="404"/>
    </location>
</feature>
<feature type="domain" description="ATP-grasp 1">
    <location>
        <begin position="551"/>
        <end position="743"/>
    </location>
</feature>
<feature type="domain" description="ATP-grasp 2">
    <location>
        <begin position="1093"/>
        <end position="1284"/>
    </location>
</feature>
<feature type="domain" description="MGS-like" evidence="4">
    <location>
        <begin position="1355"/>
        <end position="1500"/>
    </location>
</feature>
<feature type="region of interest" description="Anthranilate phosphoribosyltransferase homolog">
    <location>
        <begin position="39"/>
        <end position="218"/>
    </location>
</feature>
<feature type="binding site" evidence="34">
    <location>
        <position position="1391"/>
    </location>
    <ligand>
        <name>N-acetyl-L-glutamate</name>
        <dbReference type="ChEBI" id="CHEBI:44337"/>
        <note>allosteric activator</note>
    </ligand>
</feature>
<feature type="binding site" evidence="34">
    <location>
        <position position="1394"/>
    </location>
    <ligand>
        <name>N-acetyl-L-glutamate</name>
        <dbReference type="ChEBI" id="CHEBI:44337"/>
        <note>allosteric activator</note>
    </ligand>
</feature>
<feature type="binding site" evidence="34">
    <location>
        <position position="1410"/>
    </location>
    <ligand>
        <name>N-acetyl-L-glutamate</name>
        <dbReference type="ChEBI" id="CHEBI:44337"/>
        <note>allosteric activator</note>
    </ligand>
</feature>
<feature type="binding site" evidence="34">
    <location>
        <position position="1437"/>
    </location>
    <ligand>
        <name>N-acetyl-L-glutamate</name>
        <dbReference type="ChEBI" id="CHEBI:44337"/>
        <note>allosteric activator</note>
    </ligand>
</feature>
<feature type="binding site" evidence="34">
    <location>
        <position position="1440"/>
    </location>
    <ligand>
        <name>N-acetyl-L-glutamate</name>
        <dbReference type="ChEBI" id="CHEBI:44337"/>
        <note>allosteric activator</note>
    </ligand>
</feature>
<feature type="binding site" evidence="34">
    <location>
        <position position="1449"/>
    </location>
    <ligand>
        <name>N-acetyl-L-glutamate</name>
        <dbReference type="ChEBI" id="CHEBI:44337"/>
        <note>allosteric activator</note>
    </ligand>
</feature>
<feature type="modified residue" description="N6-acetyllysine; alternate" evidence="3">
    <location>
        <position position="55"/>
    </location>
</feature>
<feature type="modified residue" description="N6-glutaryllysine; alternate" evidence="25">
    <location>
        <position position="55"/>
    </location>
</feature>
<feature type="modified residue" description="N6-succinyllysine; alternate" evidence="3">
    <location>
        <position position="55"/>
    </location>
</feature>
<feature type="modified residue" description="N6-acetyllysine; alternate" evidence="3">
    <location>
        <position position="57"/>
    </location>
</feature>
<feature type="modified residue" description="N6-succinyllysine; alternate" evidence="3">
    <location>
        <position position="57"/>
    </location>
</feature>
<feature type="modified residue" description="N6-acetyllysine; alternate" evidence="3">
    <location>
        <position position="119"/>
    </location>
</feature>
<feature type="modified residue" description="N6-succinyllysine; alternate" evidence="3">
    <location>
        <position position="119"/>
    </location>
</feature>
<feature type="modified residue" description="Phosphoserine" evidence="36">
    <location>
        <position position="148"/>
    </location>
</feature>
<feature type="modified residue" description="N6-acetyllysine; alternate" evidence="3">
    <location>
        <position position="157"/>
    </location>
</feature>
<feature type="modified residue" description="N6-succinyllysine; alternate" evidence="3">
    <location>
        <position position="157"/>
    </location>
</feature>
<feature type="modified residue" description="N6-acetyllysine; alternate" evidence="3">
    <location>
        <position position="171"/>
    </location>
</feature>
<feature type="modified residue" description="N6-glutaryllysine; alternate" evidence="25">
    <location>
        <position position="171"/>
    </location>
</feature>
<feature type="modified residue" description="N6-glutaryllysine" evidence="25">
    <location>
        <position position="176"/>
    </location>
</feature>
<feature type="modified residue" description="N6-acetyllysine" evidence="3">
    <location>
        <position position="182"/>
    </location>
</feature>
<feature type="modified residue" description="N6-acetyllysine" evidence="3">
    <location>
        <position position="197"/>
    </location>
</feature>
<feature type="modified residue" description="N6-acetyllysine; alternate" evidence="3">
    <location>
        <position position="207"/>
    </location>
</feature>
<feature type="modified residue" description="N6-glutaryllysine; alternate" evidence="25">
    <location>
        <position position="207"/>
    </location>
</feature>
<feature type="modified residue" description="N6-succinyllysine; alternate" evidence="3">
    <location>
        <position position="207"/>
    </location>
</feature>
<feature type="modified residue" description="N6-acetyllysine; alternate" evidence="3">
    <location>
        <position position="210"/>
    </location>
</feature>
<feature type="modified residue" description="N6-glutaryllysine; alternate" evidence="25">
    <location>
        <position position="210"/>
    </location>
</feature>
<feature type="modified residue" description="N6-acetyllysine; alternate" evidence="3">
    <location>
        <position position="214"/>
    </location>
</feature>
<feature type="modified residue" description="N6-glutaryllysine; alternate" evidence="25">
    <location>
        <position position="214"/>
    </location>
</feature>
<feature type="modified residue" description="N6-succinyllysine; alternate" evidence="3">
    <location>
        <position position="214"/>
    </location>
</feature>
<feature type="modified residue" description="N6-acetyllysine; alternate" evidence="3">
    <location>
        <position position="219"/>
    </location>
</feature>
<feature type="modified residue" description="N6-glutaryllysine; alternate" evidence="25">
    <location>
        <position position="219"/>
    </location>
</feature>
<feature type="modified residue" description="N6-acetyllysine; alternate" evidence="3">
    <location>
        <position position="228"/>
    </location>
</feature>
<feature type="modified residue" description="N6-glutaryllysine; alternate" evidence="25">
    <location>
        <position position="228"/>
    </location>
</feature>
<feature type="modified residue" description="N6-glutaryllysine" evidence="25">
    <location>
        <position position="237"/>
    </location>
</feature>
<feature type="modified residue" description="N6-acetyllysine; alternate" evidence="3">
    <location>
        <position position="280"/>
    </location>
</feature>
<feature type="modified residue" description="N6-glutaryllysine; alternate" evidence="25">
    <location>
        <position position="280"/>
    </location>
</feature>
<feature type="modified residue" description="N6-acetyllysine; alternate" evidence="3">
    <location>
        <position position="287"/>
    </location>
</feature>
<feature type="modified residue" description="N6-succinyllysine; alternate" evidence="3">
    <location>
        <position position="287"/>
    </location>
</feature>
<feature type="modified residue" description="N6-acetyllysine; alternate" evidence="3">
    <location>
        <position position="307"/>
    </location>
</feature>
<feature type="modified residue" description="N6-glutaryllysine; alternate" evidence="25">
    <location>
        <position position="307"/>
    </location>
</feature>
<feature type="modified residue" description="N6-succinyllysine; alternate" evidence="3">
    <location>
        <position position="307"/>
    </location>
</feature>
<feature type="modified residue" description="N6-acetyllysine; alternate" evidence="3">
    <location>
        <position position="310"/>
    </location>
</feature>
<feature type="modified residue" description="N6-glutaryllysine; alternate" evidence="25">
    <location>
        <position position="310"/>
    </location>
</feature>
<feature type="modified residue" description="N6-succinyllysine" evidence="3">
    <location>
        <position position="400"/>
    </location>
</feature>
<feature type="modified residue" description="N6-glutaryllysine; alternate" evidence="25">
    <location>
        <position position="402"/>
    </location>
</feature>
<feature type="modified residue" description="N6-succinyllysine; alternate" evidence="3">
    <location>
        <position position="402"/>
    </location>
</feature>
<feature type="modified residue" description="N6-acetyllysine; alternate" evidence="3">
    <location>
        <position position="412"/>
    </location>
</feature>
<feature type="modified residue" description="N6-glutaryllysine; alternate" evidence="25">
    <location>
        <position position="412"/>
    </location>
</feature>
<feature type="modified residue" description="N6-succinyllysine; alternate" evidence="3">
    <location>
        <position position="412"/>
    </location>
</feature>
<feature type="modified residue" description="N6-acetyllysine; alternate" evidence="3">
    <location>
        <position position="453"/>
    </location>
</feature>
<feature type="modified residue" description="N6-glutaryllysine; alternate" evidence="25">
    <location>
        <position position="453"/>
    </location>
</feature>
<feature type="modified residue" description="N6-acetyllysine; alternate" evidence="3">
    <location>
        <position position="458"/>
    </location>
</feature>
<feature type="modified residue" description="N6-glutaryllysine; alternate" evidence="25">
    <location>
        <position position="458"/>
    </location>
</feature>
<feature type="modified residue" description="N6-succinyllysine; alternate" evidence="3">
    <location>
        <position position="458"/>
    </location>
</feature>
<feature type="modified residue" description="N6-acetyllysine; alternate" evidence="3">
    <location>
        <position position="522"/>
    </location>
</feature>
<feature type="modified residue" description="N6-succinyllysine; alternate" evidence="3">
    <location>
        <position position="522"/>
    </location>
</feature>
<feature type="modified residue" description="N6-acetyllysine; alternate" evidence="3">
    <location>
        <position position="527"/>
    </location>
</feature>
<feature type="modified residue" description="N6-glutaryllysine; alternate" evidence="25">
    <location>
        <position position="527"/>
    </location>
</feature>
<feature type="modified residue" description="N6-succinyllysine; alternate" evidence="3">
    <location>
        <position position="527"/>
    </location>
</feature>
<feature type="modified residue" description="N6-acetyllysine; alternate" evidence="3">
    <location>
        <position position="532"/>
    </location>
</feature>
<feature type="modified residue" description="N6-glutaryllysine; alternate" evidence="25">
    <location>
        <position position="532"/>
    </location>
</feature>
<feature type="modified residue" description="Phosphoserine; alternate" evidence="3">
    <location>
        <position position="537"/>
    </location>
</feature>
<feature type="modified residue" description="Phosphoserine" evidence="2">
    <location>
        <position position="540"/>
    </location>
</feature>
<feature type="modified residue" description="N6-acetyllysine; alternate" evidence="3">
    <location>
        <position position="553"/>
    </location>
</feature>
<feature type="modified residue" description="N6-glutaryllysine; alternate" evidence="25">
    <location>
        <position position="553"/>
    </location>
</feature>
<feature type="modified residue" description="N6-succinyllysine; alternate" evidence="3">
    <location>
        <position position="553"/>
    </location>
</feature>
<feature type="modified residue" description="N6-acetyllysine; alternate" evidence="3">
    <location>
        <position position="560"/>
    </location>
</feature>
<feature type="modified residue" description="N6-succinyllysine; alternate" evidence="3">
    <location>
        <position position="560"/>
    </location>
</feature>
<feature type="modified residue" description="Phosphoserine" evidence="36">
    <location>
        <position position="569"/>
    </location>
</feature>
<feature type="modified residue" description="N6-acetyllysine; alternate" evidence="3">
    <location>
        <position position="575"/>
    </location>
</feature>
<feature type="modified residue" description="N6-succinyllysine; alternate" evidence="3">
    <location>
        <position position="575"/>
    </location>
</feature>
<feature type="modified residue" description="N6-acetyllysine; alternate" evidence="3">
    <location>
        <position position="612"/>
    </location>
</feature>
<feature type="modified residue" description="N6-succinyllysine; alternate" evidence="3">
    <location>
        <position position="612"/>
    </location>
</feature>
<feature type="modified residue" description="N6-acetyllysine" evidence="3">
    <location>
        <position position="630"/>
    </location>
</feature>
<feature type="modified residue" description="N6-glutaryllysine" evidence="25">
    <location>
        <position position="728"/>
    </location>
</feature>
<feature type="modified residue" description="N6-acetyllysine; alternate" evidence="3">
    <location>
        <position position="751"/>
    </location>
</feature>
<feature type="modified residue" description="N6-succinyllysine; alternate" evidence="3">
    <location>
        <position position="751"/>
    </location>
</feature>
<feature type="modified residue" description="N6-acetyllysine; alternate" evidence="3">
    <location>
        <position position="757"/>
    </location>
</feature>
<feature type="modified residue" description="N6-glutaryllysine; alternate" evidence="25">
    <location>
        <position position="757"/>
    </location>
</feature>
<feature type="modified residue" description="N6-succinyllysine; alternate" evidence="3">
    <location>
        <position position="757"/>
    </location>
</feature>
<feature type="modified residue" description="N6-acetyllysine; alternate" evidence="3">
    <location>
        <position position="772"/>
    </location>
</feature>
<feature type="modified residue" description="N6-glutaryllysine; alternate" evidence="25">
    <location>
        <position position="772"/>
    </location>
</feature>
<feature type="modified residue" description="N6-acetyllysine; alternate" evidence="3">
    <location>
        <position position="793"/>
    </location>
</feature>
<feature type="modified residue" description="N6-glutaryllysine; alternate" evidence="25">
    <location>
        <position position="793"/>
    </location>
</feature>
<feature type="modified residue" description="N6-succinyllysine; alternate" evidence="3">
    <location>
        <position position="793"/>
    </location>
</feature>
<feature type="modified residue" description="N6-acetyllysine; alternate" evidence="3">
    <location>
        <position position="811"/>
    </location>
</feature>
<feature type="modified residue" description="N6-glutaryllysine; alternate" evidence="25">
    <location>
        <position position="811"/>
    </location>
</feature>
<feature type="modified residue" description="N6-acetyllysine; alternate" evidence="3">
    <location>
        <position position="831"/>
    </location>
</feature>
<feature type="modified residue" description="N6-succinyllysine; alternate" evidence="3">
    <location>
        <position position="831"/>
    </location>
</feature>
<feature type="modified residue" description="Phosphoserine" evidence="36">
    <location>
        <position position="835"/>
    </location>
</feature>
<feature type="modified residue" description="N6-acetyllysine; alternate" evidence="3">
    <location>
        <position position="841"/>
    </location>
</feature>
<feature type="modified residue" description="N6-glutaryllysine; alternate" evidence="25">
    <location>
        <position position="841"/>
    </location>
</feature>
<feature type="modified residue" description="N6-acetyllysine; alternate" evidence="3">
    <location>
        <position position="856"/>
    </location>
</feature>
<feature type="modified residue" description="N6-glutaryllysine; alternate" evidence="25">
    <location>
        <position position="856"/>
    </location>
</feature>
<feature type="modified residue" description="N6-glutaryllysine" evidence="25">
    <location>
        <position position="869"/>
    </location>
</feature>
<feature type="modified residue" description="N6-acetyllysine; alternate" evidence="3">
    <location>
        <position position="875"/>
    </location>
</feature>
<feature type="modified residue" description="N6-glutaryllysine; alternate" evidence="25">
    <location>
        <position position="875"/>
    </location>
</feature>
<feature type="modified residue" description="N6-succinyllysine; alternate" evidence="3">
    <location>
        <position position="875"/>
    </location>
</feature>
<feature type="modified residue" description="N6-acetyllysine; alternate" evidence="3">
    <location>
        <position position="889"/>
    </location>
</feature>
<feature type="modified residue" description="N6-glutaryllysine; alternate" evidence="25">
    <location>
        <position position="889"/>
    </location>
</feature>
<feature type="modified residue" description="N6-succinyllysine; alternate" evidence="3">
    <location>
        <position position="889"/>
    </location>
</feature>
<feature type="modified residue" description="N6-acetyllysine; alternate" evidence="3">
    <location>
        <position position="892"/>
    </location>
</feature>
<feature type="modified residue" description="N6-glutaryllysine; alternate" evidence="25">
    <location>
        <position position="892"/>
    </location>
</feature>
<feature type="modified residue" description="N6-succinyllysine; alternate" evidence="3">
    <location>
        <position position="892"/>
    </location>
</feature>
<feature type="modified residue" description="Phosphoserine" evidence="2">
    <location>
        <position position="896"/>
    </location>
</feature>
<feature type="modified residue" description="Phosphoserine" evidence="2">
    <location>
        <position position="898"/>
    </location>
</feature>
<feature type="modified residue" description="N6-glutaryllysine" evidence="25">
    <location>
        <position position="905"/>
    </location>
</feature>
<feature type="modified residue" description="N6-acetyllysine; alternate" evidence="3">
    <location>
        <position position="908"/>
    </location>
</feature>
<feature type="modified residue" description="N6-glutaryllysine; alternate" evidence="25">
    <location>
        <position position="908"/>
    </location>
</feature>
<feature type="modified residue" description="N6-acetyllysine; alternate" evidence="3">
    <location>
        <position position="915"/>
    </location>
</feature>
<feature type="modified residue" description="N6-glutaryllysine; alternate" evidence="25">
    <location>
        <position position="915"/>
    </location>
</feature>
<feature type="modified residue" description="N6-succinyllysine; alternate" evidence="3">
    <location>
        <position position="915"/>
    </location>
</feature>
<feature type="modified residue" description="N6-acetyllysine; alternate" evidence="3">
    <location>
        <position position="919"/>
    </location>
</feature>
<feature type="modified residue" description="N6-glutaryllysine; alternate" evidence="25">
    <location>
        <position position="919"/>
    </location>
</feature>
<feature type="modified residue" description="N6-succinyllysine; alternate" evidence="3">
    <location>
        <position position="919"/>
    </location>
</feature>
<feature type="modified residue" description="N6-acetyllysine" evidence="3">
    <location>
        <position position="935"/>
    </location>
</feature>
<feature type="modified residue" description="Phosphoserine" evidence="35">
    <location>
        <position position="1036"/>
    </location>
</feature>
<feature type="modified residue" description="N6-acetyllysine; alternate" evidence="3">
    <location>
        <position position="1074"/>
    </location>
</feature>
<feature type="modified residue" description="N6-glutaryllysine; alternate" evidence="25">
    <location>
        <position position="1074"/>
    </location>
</feature>
<feature type="modified residue" description="N6-succinyllysine; alternate" evidence="3">
    <location>
        <position position="1074"/>
    </location>
</feature>
<feature type="modified residue" description="Phosphoserine" evidence="35 36">
    <location>
        <position position="1079"/>
    </location>
</feature>
<feature type="modified residue" description="Phosphoserine" evidence="2">
    <location>
        <position position="1090"/>
    </location>
</feature>
<feature type="modified residue" description="Phosphoserine" evidence="2">
    <location>
        <position position="1093"/>
    </location>
</feature>
<feature type="modified residue" description="N6-acetyllysine; alternate" evidence="3">
    <location>
        <position position="1100"/>
    </location>
</feature>
<feature type="modified residue" description="N6-succinyllysine; alternate" evidence="3">
    <location>
        <position position="1100"/>
    </location>
</feature>
<feature type="modified residue" description="N6-succinyllysine" evidence="3">
    <location>
        <position position="1149"/>
    </location>
</feature>
<feature type="modified residue" description="N6-glutaryllysine" evidence="25">
    <location>
        <position position="1150"/>
    </location>
</feature>
<feature type="modified residue" description="N6-acetyllysine; alternate" evidence="3">
    <location>
        <position position="1168"/>
    </location>
</feature>
<feature type="modified residue" description="N6-glutaryllysine; alternate" evidence="25">
    <location>
        <position position="1168"/>
    </location>
</feature>
<feature type="modified residue" description="N6-succinyllysine; alternate" evidence="3">
    <location>
        <position position="1168"/>
    </location>
</feature>
<feature type="modified residue" description="N6-acetyllysine; alternate" evidence="3">
    <location>
        <position position="1183"/>
    </location>
</feature>
<feature type="modified residue" description="N6-glutaryllysine; alternate" evidence="25">
    <location>
        <position position="1183"/>
    </location>
</feature>
<feature type="modified residue" description="N6-succinyllysine; alternate" evidence="3">
    <location>
        <position position="1183"/>
    </location>
</feature>
<feature type="modified residue" description="Phosphoserine" evidence="36">
    <location>
        <position position="1203"/>
    </location>
</feature>
<feature type="modified residue" description="N6-acetyllysine" evidence="3">
    <location>
        <position position="1222"/>
    </location>
</feature>
<feature type="modified residue" description="N6-glutaryllysine" evidence="25">
    <location>
        <position position="1224"/>
    </location>
</feature>
<feature type="modified residue" description="N6-acetyllysine; alternate" evidence="3">
    <location>
        <position position="1232"/>
    </location>
</feature>
<feature type="modified residue" description="N6-succinyllysine; alternate" evidence="3">
    <location>
        <position position="1232"/>
    </location>
</feature>
<feature type="modified residue" description="N6-acetyllysine; alternate" evidence="3">
    <location>
        <position position="1269"/>
    </location>
</feature>
<feature type="modified residue" description="N6-succinyllysine; alternate" evidence="3">
    <location>
        <position position="1269"/>
    </location>
</feature>
<feature type="modified residue" description="N6-acetyllysine; alternate" evidence="3">
    <location>
        <position position="1291"/>
    </location>
</feature>
<feature type="modified residue" description="N6-succinyllysine; alternate" evidence="3">
    <location>
        <position position="1291"/>
    </location>
</feature>
<feature type="modified residue" description="N6-acetyllysine; alternate" evidence="3">
    <location>
        <position position="1356"/>
    </location>
</feature>
<feature type="modified residue" description="N6-glutaryllysine; alternate" evidence="25">
    <location>
        <position position="1356"/>
    </location>
</feature>
<feature type="modified residue" description="N6-succinyllysine; alternate" evidence="3">
    <location>
        <position position="1356"/>
    </location>
</feature>
<feature type="modified residue" description="N6-glutaryllysine; alternate" evidence="25">
    <location>
        <position position="1360"/>
    </location>
</feature>
<feature type="modified residue" description="N6-succinyllysine; alternate" evidence="3">
    <location>
        <position position="1360"/>
    </location>
</feature>
<feature type="modified residue" description="Phosphoserine" evidence="36">
    <location>
        <position position="1419"/>
    </location>
</feature>
<feature type="modified residue" description="Phosphoserine" evidence="36">
    <location>
        <position position="1431"/>
    </location>
</feature>
<feature type="modified residue" description="N6-acetyllysine; alternate" evidence="3">
    <location>
        <position position="1444"/>
    </location>
</feature>
<feature type="modified residue" description="N6-succinyllysine; alternate" evidence="3">
    <location>
        <position position="1444"/>
    </location>
</feature>
<feature type="modified residue" description="N6-acetyllysine; alternate" evidence="3">
    <location>
        <position position="1471"/>
    </location>
</feature>
<feature type="modified residue" description="N6-succinyllysine; alternate" evidence="3">
    <location>
        <position position="1471"/>
    </location>
</feature>
<feature type="modified residue" description="N6-acetyllysine; alternate" evidence="3">
    <location>
        <position position="1479"/>
    </location>
</feature>
<feature type="modified residue" description="N6-glutaryllysine; alternate" evidence="25">
    <location>
        <position position="1479"/>
    </location>
</feature>
<feature type="modified residue" description="N6-succinyllysine; alternate" evidence="3">
    <location>
        <position position="1479"/>
    </location>
</feature>
<feature type="modified residue" description="N6-acetyllysine; alternate" evidence="3">
    <location>
        <position position="1486"/>
    </location>
</feature>
<feature type="modified residue" description="N6-glutaryllysine; alternate" evidence="25">
    <location>
        <position position="1486"/>
    </location>
</feature>
<feature type="modified residue" description="N6-succinyllysine; alternate" evidence="3">
    <location>
        <position position="1486"/>
    </location>
</feature>
<feature type="glycosylation site" description="O-linked (GlcNAc) serine; alternate" evidence="1">
    <location>
        <position position="537"/>
    </location>
</feature>
<feature type="glycosylation site" description="O-linked (GlcNAc) serine" evidence="1">
    <location>
        <position position="1331"/>
    </location>
</feature>
<feature type="glycosylation site" description="O-linked (GlcNAc) threonine" evidence="1">
    <location>
        <position position="1332"/>
    </location>
</feature>
<feature type="splice variant" id="VSP_009332" description="In isoform 2." evidence="31 33">
    <location>
        <begin position="1"/>
        <end position="451"/>
    </location>
</feature>
<feature type="splice variant" id="VSP_046685" description="In isoform 3." evidence="32">
    <original>M</original>
    <variation>MPQIIKM</variation>
    <location>
        <position position="1"/>
    </location>
</feature>
<feature type="sequence variant" id="VAR_066171" description="In CPS1D." evidence="19">
    <original>A</original>
    <variation>V</variation>
    <location>
        <position position="43"/>
    </location>
</feature>
<feature type="sequence variant" id="VAR_066172" description="In CPS1D." evidence="19">
    <original>G</original>
    <variation>D</variation>
    <location>
        <position position="58"/>
    </location>
</feature>
<feature type="sequence variant" id="VAR_066173" description="In CPS1D; dbSNP:rs375979196." evidence="19">
    <original>S</original>
    <variation>F</variation>
    <location>
        <position position="65"/>
    </location>
</feature>
<feature type="sequence variant" id="VAR_066174" description="In CPS1D." evidence="19">
    <original>V</original>
    <variation>G</variation>
    <location>
        <position position="71"/>
    </location>
</feature>
<feature type="sequence variant" id="VAR_063560" description="In CPS1D; dbSNP:rs1265394565." evidence="14">
    <original>G</original>
    <variation>E</variation>
    <location>
        <position position="79"/>
    </location>
</feature>
<feature type="sequence variant" id="VAR_066175" description="In CPS1D; dbSNP:rs1553509297." evidence="19">
    <original>P</original>
    <variation>S</variation>
    <location>
        <position position="87"/>
    </location>
</feature>
<feature type="sequence variant" id="VAR_066176" description="In CPS1D." evidence="19">
    <original>Y</original>
    <variation>D</variation>
    <location>
        <position position="89"/>
    </location>
</feature>
<feature type="sequence variant" id="VAR_064062" description="In CPS1D; modestly decreases enzyme activity." evidence="18">
    <original>S</original>
    <variation>F</variation>
    <location>
        <position position="123"/>
    </location>
</feature>
<feature type="sequence variant" id="VAR_075404" description="In CPS1D; uncertain significance." evidence="27">
    <original>S</original>
    <variation>Y</variation>
    <location>
        <position position="123"/>
    </location>
</feature>
<feature type="sequence variant" id="VAR_066177" description="In CPS1D." evidence="19">
    <original>D</original>
    <variation>G</variation>
    <location>
        <position position="165"/>
    </location>
</feature>
<feature type="sequence variant" id="VAR_075405" description="In CPS1D; uncertain significance; dbSNP:rs1553509661." evidence="27">
    <original>R</original>
    <variation>W</variation>
    <location>
        <position position="174"/>
    </location>
</feature>
<feature type="sequence variant" id="VAR_063561" description="In CPS1D." evidence="14">
    <original>Y</original>
    <variation>N</variation>
    <location>
        <position position="212"/>
    </location>
</feature>
<feature type="sequence variant" id="VAR_066178" description="In CPS1D." evidence="19">
    <original>D</original>
    <variation>V</variation>
    <location>
        <position position="224"/>
    </location>
</feature>
<feature type="sequence variant" id="VAR_066179" description="In CPS1D; dbSNP:rs767905306." evidence="19">
    <original>R</original>
    <variation>C</variation>
    <location>
        <position position="233"/>
    </location>
</feature>
<feature type="sequence variant" id="VAR_066180" description="In CPS1D; dbSNP:rs752902711." evidence="19">
    <original>H</original>
    <variation>P</variation>
    <location>
        <position position="243"/>
    </location>
</feature>
<feature type="sequence variant" id="VAR_066181" description="In CPS1D." evidence="19">
    <original>G</original>
    <variation>E</variation>
    <location>
        <position position="258"/>
    </location>
</feature>
<feature type="sequence variant" id="VAR_066182" description="In CPS1D; dbSNP:rs1471393474." evidence="19">
    <original>G</original>
    <variation>E</variation>
    <location>
        <position position="263"/>
    </location>
</feature>
<feature type="sequence variant" id="VAR_063562" description="In CPS1D; dbSNP:rs753751183." evidence="14">
    <original>K</original>
    <variation>N</variation>
    <location>
        <position position="280"/>
    </location>
</feature>
<feature type="sequence variant" id="VAR_066104" description="In CPS1D; dbSNP:rs973321068." evidence="13">
    <original>G</original>
    <variation>E</variation>
    <location>
        <position position="301"/>
    </location>
</feature>
<feature type="sequence variant" id="VAR_066183" description="In CPS1D; associated with T-986; dbSNP:rs775920437." evidence="19">
    <original>A</original>
    <variation>V</variation>
    <location>
        <position position="304"/>
    </location>
</feature>
<feature type="sequence variant" id="VAR_066184" description="In CPS1D; dbSNP:rs1273594946." evidence="19">
    <original>G</original>
    <variation>E</variation>
    <location>
        <position position="317"/>
    </location>
</feature>
<feature type="sequence variant" id="VAR_014077" description="In CPS1D; modestly decreases enzyme activity; dbSNP:rs28940283." evidence="7 18">
    <original>H</original>
    <variation>R</variation>
    <location>
        <position position="337"/>
    </location>
</feature>
<feature type="sequence variant" id="VAR_075806" description="In CPS1D." evidence="22">
    <original>L</original>
    <variation>S</variation>
    <location>
        <position position="341"/>
    </location>
</feature>
<feature type="sequence variant" id="VAR_006834" description="No negative effect on protein stability, enzyme activity and thermal stability; dbSNP:rs1047883." evidence="9 23 29 30">
    <original>T</original>
    <variation>A</variation>
    <location>
        <position position="344"/>
    </location>
</feature>
<feature type="sequence variant" id="VAR_061752" description="In dbSNP:rs1047883.">
    <original>T</original>
    <variation>S</variation>
    <location>
        <position position="344"/>
    </location>
</feature>
<feature type="sequence variant" id="VAR_075406" description="In CPS1D; around 80% decrease in enzyme activity; significant reduction in thermal stability; approximately 4-fold decrease in the apparent Vmax for ATP, bicarbonate and ammonia; dbSNP:rs1472190012." evidence="23">
    <original>N</original>
    <variation>D</variation>
    <location>
        <position position="355"/>
    </location>
</feature>
<feature type="sequence variant" id="VAR_066185" description="In CPS1D; dbSNP:rs149930500." evidence="19">
    <original>D</original>
    <variation>H</variation>
    <location>
        <position position="358"/>
    </location>
</feature>
<feature type="sequence variant" id="VAR_066186" description="In CPS1D; dbSNP:rs201407486." evidence="19">
    <original>P</original>
    <variation>L</variation>
    <location>
        <position position="382"/>
    </location>
</feature>
<feature type="sequence variant" id="VAR_066105" description="In CPS1D; around 40% decrease in enzyme activity; significant loss of thermal stability." evidence="13 23">
    <original>Y</original>
    <variation>C</variation>
    <location>
        <position position="389"/>
    </location>
</feature>
<feature type="sequence variant" id="VAR_066106" description="In CPS1D; significant loss of protein stability." evidence="13 23">
    <original>L</original>
    <variation>R</variation>
    <location>
        <position position="390"/>
    </location>
</feature>
<feature type="sequence variant" id="VAR_066187" description="In CPS1D; uncertain significance; associated with N-937 in a patient; dbSNP:rs760895692." evidence="19 26">
    <original>G</original>
    <variation>R</variation>
    <location>
        <position position="401"/>
    </location>
</feature>
<feature type="sequence variant" id="VAR_066188" description="In CPS1D; dbSNP:rs778766382." evidence="19">
    <original>G</original>
    <variation>R</variation>
    <location>
        <position position="431"/>
    </location>
</feature>
<feature type="sequence variant" id="VAR_066189" description="In CPS1D." evidence="19">
    <original>G</original>
    <variation>V</variation>
    <location>
        <position position="432"/>
    </location>
</feature>
<feature type="sequence variant" id="VAR_063563" description="In CPS1D; almost complete loss of enzyme activity; dbSNP:rs772497399." evidence="14 23">
    <original>A</original>
    <variation>P</variation>
    <location>
        <position position="438"/>
    </location>
</feature>
<feature type="sequence variant" id="VAR_066190" description="In CPS1D; dbSNP:rs772497399." evidence="19">
    <original>A</original>
    <variation>T</variation>
    <location>
        <position position="438"/>
    </location>
</feature>
<feature type="sequence variant" id="VAR_066191" description="In CPS1D." evidence="19">
    <original>K</original>
    <variation>E</variation>
    <location>
        <position position="450"/>
    </location>
</feature>
<feature type="sequence variant" id="VAR_017562" description="In CPS1D; dbSNP:rs371350538." evidence="10">
    <original>V</original>
    <variation>G</variation>
    <location>
        <position position="457"/>
    </location>
</feature>
<feature type="sequence variant" id="VAR_064063" description="In CPS1D." evidence="18">
    <original>T</original>
    <variation>N</variation>
    <location>
        <position position="471"/>
    </location>
</feature>
<feature type="sequence variant" id="VAR_066192" description="In CPS1D." evidence="19">
    <original>A</original>
    <variation>P</variation>
    <location>
        <position position="498"/>
    </location>
</feature>
<feature type="sequence variant" id="VAR_070211" description="Found in a patient with VACTERL syndrome and postsurgical neonatal pulmonary hypertension; uncertain significance; dbSNP:rs1250316045." evidence="20">
    <original>G</original>
    <variation>V</variation>
    <location>
        <position position="530"/>
    </location>
</feature>
<feature type="sequence variant" id="VAR_066193" description="In CPS1D." evidence="19">
    <original>V</original>
    <variation>E</variation>
    <location>
        <position position="531"/>
    </location>
</feature>
<feature type="sequence variant" id="VAR_066194" description="In CPS1D." evidence="19">
    <original>V</original>
    <variation>G</variation>
    <location>
        <position position="531"/>
    </location>
</feature>
<feature type="sequence variant" id="VAR_006835" description="In CPS1D; almost complete loss of enzyme activity; approximately 60-fold increase in the apparent Km for bicarbonate and approximately 4-fold respective decrease and increase in the apparent Vmax and Km for ammonia; dbSNP:rs121912592." evidence="19 23 29">
    <original>T</original>
    <variation>M</variation>
    <location>
        <position position="544"/>
    </location>
</feature>
<feature type="sequence variant" id="VAR_066195" description="In CPS1D; dbSNP:rs1242028775." evidence="19">
    <original>R</original>
    <variation>C</variation>
    <location>
        <position position="587"/>
    </location>
</feature>
<feature type="sequence variant" id="VAR_063564" description="In CPS1D; dbSNP:rs1553512642." evidence="14 19">
    <original>R</original>
    <variation>H</variation>
    <location>
        <position position="587"/>
    </location>
</feature>
<feature type="sequence variant" id="VAR_066196" description="In CPS1D." evidence="19">
    <original>R</original>
    <variation>L</variation>
    <location>
        <position position="587"/>
    </location>
</feature>
<feature type="sequence variant" id="VAR_066142" description="In CPS1D; dbSNP:rs777233486." evidence="13">
    <original>A</original>
    <variation>T</variation>
    <location>
        <position position="589"/>
    </location>
</feature>
<feature type="sequence variant" id="VAR_063565" description="In CPS1D; dbSNP:rs1048119191." evidence="14">
    <original>G</original>
    <variation>R</variation>
    <location>
        <position position="593"/>
    </location>
</feature>
<feature type="sequence variant" id="VAR_066197" description="In CPS1D." evidence="19">
    <original>S</original>
    <variation>L</variation>
    <location>
        <position position="597"/>
    </location>
</feature>
<feature type="sequence variant" id="VAR_066198" description="In CPS1D; dbSNP:rs1553512962." evidence="19">
    <original>V</original>
    <variation>M</variation>
    <location>
        <position position="622"/>
    </location>
</feature>
<feature type="sequence variant" id="VAR_066199" description="In CPS1D; dbSNP:rs1275599086." evidence="19">
    <original>G</original>
    <variation>D</variation>
    <location>
        <position position="628"/>
    </location>
</feature>
<feature type="sequence variant" id="VAR_066200" description="In CPS1D; dbSNP:rs1553512974." evidence="19 26">
    <original>I</original>
    <variation>R</variation>
    <location>
        <position position="632"/>
    </location>
</feature>
<feature type="sequence variant" id="VAR_066201" description="In CPS1D; dbSNP:rs757205958." evidence="19">
    <original>R</original>
    <variation>P</variation>
    <location>
        <position position="638"/>
    </location>
</feature>
<feature type="sequence variant" id="VAR_066143" description="In CPS1D; dbSNP:rs142693704." evidence="13">
    <original>A</original>
    <variation>S</variation>
    <location>
        <position position="640"/>
    </location>
</feature>
<feature type="sequence variant" id="VAR_066202" description="In CPS1D." evidence="19">
    <original>C</original>
    <variation>Y</variation>
    <location>
        <position position="648"/>
    </location>
</feature>
<feature type="sequence variant" id="VAR_063566" description="In CPS1D." evidence="14">
    <original>E</original>
    <variation>K</variation>
    <location>
        <position position="651"/>
    </location>
</feature>
<feature type="sequence variant" id="VAR_066203" description="In CPS1D." evidence="19">
    <original>D</original>
    <variation>V</variation>
    <location>
        <position position="654"/>
    </location>
</feature>
<feature type="sequence variant" id="VAR_075807" description="In CPS1D." evidence="22">
    <original>G</original>
    <variation>R</variation>
    <location>
        <position position="661"/>
    </location>
</feature>
<feature type="sequence variant" id="VAR_063567" description="In CPS1D." evidence="14">
    <original>N</original>
    <variation>I</variation>
    <location>
        <position position="674"/>
    </location>
</feature>
<feature type="sequence variant" id="VAR_066204" description="In CPS1D; dbSNP:rs1248368809." evidence="19">
    <original>N</original>
    <variation>K</variation>
    <location>
        <position position="674"/>
    </location>
</feature>
<feature type="sequence variant" id="VAR_064064" description="In CPS1D; results in a poor enzyme expression and solubility; hampers correct enzyme folding." evidence="18">
    <original>Q</original>
    <variation>P</variation>
    <location>
        <position position="678"/>
    </location>
</feature>
<feature type="sequence variant" id="VAR_066205" description="In CPS1D." evidence="19">
    <original>N</original>
    <variation>S</variation>
    <location>
        <position position="698"/>
    </location>
</feature>
<feature type="sequence variant" id="VAR_066144" description="In CPS1D; dbSNP:rs369061090." evidence="13">
    <original>N</original>
    <variation>K</variation>
    <location>
        <position position="716"/>
    </location>
</feature>
<feature type="sequence variant" id="VAR_066107" description="In CPS1D." evidence="19">
    <original>R</original>
    <variation>K</variation>
    <location>
        <position position="718"/>
    </location>
</feature>
<feature type="sequence variant" id="VAR_066108" description="In CPS1D; dbSNP:rs752339705." evidence="19">
    <original>R</original>
    <variation>Q</variation>
    <location>
        <position position="721"/>
    </location>
</feature>
<feature type="sequence variant" id="VAR_066109" description="In CPS1D." evidence="19">
    <original>A</original>
    <variation>P</variation>
    <location>
        <position position="724"/>
    </location>
</feature>
<feature type="sequence variant" id="VAR_066110" description="In CPS1D." evidence="19">
    <original>A</original>
    <variation>T</variation>
    <location>
        <position position="726"/>
    </location>
</feature>
<feature type="sequence variant" id="VAR_066111" description="In CPS1D." evidence="19">
    <original>D</original>
    <variation>V</variation>
    <location>
        <position position="767"/>
    </location>
</feature>
<feature type="sequence variant" id="VAR_064065" description="In CPS1D; the enzyme is inactive." evidence="18">
    <original>P</original>
    <variation>L</variation>
    <location>
        <position position="774"/>
    </location>
</feature>
<feature type="sequence variant" id="VAR_063568" description="In CPS1D; dbSNP:rs758724746." evidence="14 19">
    <original>R</original>
    <variation>H</variation>
    <location>
        <position position="780"/>
    </location>
</feature>
<feature type="sequence variant" id="VAR_066112" description="In CPS1D; dbSNP:rs1553513429." evidence="19">
    <original>M</original>
    <variation>I</variation>
    <location>
        <position position="792"/>
    </location>
</feature>
<feature type="sequence variant" id="VAR_066145" description="In CPS1D; dbSNP:rs201716417." evidence="19">
    <original>R</original>
    <variation>C</variation>
    <location>
        <position position="803"/>
    </location>
</feature>
<feature type="sequence variant" id="VAR_066146" description="In CPS1D; dbSNP:rs201716417." evidence="19 27">
    <original>R</original>
    <variation>G</variation>
    <location>
        <position position="803"/>
    </location>
</feature>
<feature type="sequence variant" id="VAR_066147" description="In CPS1D; dbSNP:rs201716417." evidence="19">
    <original>R</original>
    <variation>S</variation>
    <location>
        <position position="803"/>
    </location>
</feature>
<feature type="sequence variant" id="VAR_066148" description="In CPS1D; dbSNP:rs1553513861." evidence="13">
    <original>F</original>
    <variation>L</variation>
    <location>
        <position position="805"/>
    </location>
</feature>
<feature type="sequence variant" id="VAR_066149" description="In CPS1D." evidence="19">
    <original>F</original>
    <variation>S</variation>
    <location>
        <position position="805"/>
    </location>
</feature>
<feature type="sequence variant" id="VAR_017563" description="In CPS1D; dbSNP:rs1553513864." evidence="10">
    <original>Q</original>
    <variation>R</variation>
    <location>
        <position position="810"/>
    </location>
</feature>
<feature type="sequence variant" id="VAR_066150" description="In CPS1D; dbSNP:rs772782772." evidence="19">
    <original>R</original>
    <variation>W</variation>
    <location>
        <position position="814"/>
    </location>
</feature>
<feature type="sequence variant" id="VAR_066151" description="In CPS1D; dbSNP:rs1553513870." evidence="19">
    <original>C</original>
    <variation>R</variation>
    <location>
        <position position="816"/>
    </location>
</feature>
<feature type="sequence variant" id="VAR_017564" description="In CPS1D; associated in cis with E-875; causes 70% decrease of enzyme activity; significant decrease in protein yield." evidence="8 11 26">
    <original>L</original>
    <variation>S</variation>
    <location>
        <position position="843"/>
    </location>
</feature>
<feature type="sequence variant" id="VAR_063569" description="In CPS1D; moderate decrease in protein yield and partial loss of enzyme activity; dbSNP:rs1015051007." evidence="14 26">
    <original>R</original>
    <variation>C</variation>
    <location>
        <position position="850"/>
    </location>
</feature>
<feature type="sequence variant" id="VAR_030675" description="In CPS1D; partial loss of enzyme activity; dbSNP:rs767694281." evidence="12 19 26 27">
    <original>R</original>
    <variation>H</variation>
    <location>
        <position position="850"/>
    </location>
</feature>
<feature type="sequence variant" id="VAR_075407" description="In CPS1D; significant decrease in protein yield and enzyme activity." evidence="26">
    <original>T</original>
    <variation>P</variation>
    <location>
        <position position="871"/>
    </location>
</feature>
<feature type="sequence variant" id="VAR_017565" description="Associated in cis with S-843 in a patient with carbamoyl-phosphate synthase deficiency; does not affect enzyme activity; significant decrease in protein yield and thermal stability; dbSNP:rs147062907." evidence="8 11 26 28">
    <original>K</original>
    <variation>E</variation>
    <location>
        <position position="875"/>
    </location>
</feature>
<feature type="sequence variant" id="VAR_066152" description="In CPS1D; significant decrease in protein yield and enzyme activity; dbSNP:rs1388955593." evidence="19 26">
    <original>G</original>
    <variation>E</variation>
    <location>
        <position position="911"/>
    </location>
</feature>
<feature type="sequence variant" id="VAR_066153" description="In CPS1D; significant decrease in protein yield and enzyme activity." evidence="13 26">
    <original>G</original>
    <variation>V</variation>
    <location>
        <position position="911"/>
    </location>
</feature>
<feature type="sequence variant" id="VAR_066154" description="In CPS1D; significant decrease in protein yield and partial loss of enzyme activity; dbSNP:rs754706559." evidence="19 26">
    <original>S</original>
    <variation>L</variation>
    <location>
        <position position="913"/>
    </location>
</feature>
<feature type="sequence variant" id="VAR_066155" description="In CPS1D; significant decrease in protein yield and enzyme activity." evidence="19 26">
    <original>D</original>
    <variation>G</variation>
    <location>
        <position position="914"/>
    </location>
</feature>
<feature type="sequence variant" id="VAR_066156" description="In CPS1D; significant decrease in protein yield and enzyme activity; dbSNP:rs765484849." evidence="19 26">
    <original>D</original>
    <variation>H</variation>
    <location>
        <position position="914"/>
    </location>
</feature>
<feature type="sequence variant" id="VAR_030676" description="In CPS1D; significant decrease in protein yield and enzyme activity." evidence="12 26">
    <original>S</original>
    <variation>P</variation>
    <location>
        <position position="918"/>
    </location>
</feature>
<feature type="sequence variant" id="VAR_066157" description="In CPS1D; significant decrease in protein yield and partial loss of enzyme activity." evidence="19 26">
    <original>R</original>
    <variation>T</variation>
    <location>
        <position position="932"/>
    </location>
</feature>
<feature type="sequence variant" id="VAR_075408" description="In CPS1D; associated with R-401; significant decrease in protein yield and enzyme activity; dbSNP:rs760714614." evidence="26">
    <original>I</original>
    <variation>N</variation>
    <location>
        <position position="937"/>
    </location>
</feature>
<feature type="sequence variant" id="VAR_066158" description="In CPS1D; partial loss of enzyme activity and significant decrease in thermal stability; dbSNP:rs537170841." evidence="19 26">
    <original>A</original>
    <variation>T</variation>
    <location>
        <position position="949"/>
    </location>
</feature>
<feature type="sequence variant" id="VAR_066159" description="In CPS1D; significant decrease in protein yield and enzyme activity." evidence="13 26">
    <original>L</original>
    <variation>P</variation>
    <location>
        <position position="958"/>
    </location>
</feature>
<feature type="sequence variant" id="VAR_066160" description="In CPS1D; significant decrease in protein yield and thermal stability; partial loss of enzyme activity; dbSNP:rs1191587211." evidence="19 26">
    <original>Y</original>
    <variation>C</variation>
    <location>
        <position position="959"/>
    </location>
</feature>
<feature type="sequence variant" id="VAR_066161" description="In CPS1D; significant decrease in protein yield and partial loss of enzyme activity; dbSNP:rs955666400." evidence="19 26">
    <original>Y</original>
    <variation>C</variation>
    <location>
        <position position="962"/>
    </location>
</feature>
<feature type="sequence variant" id="VAR_075409" description="In CPS1D; significant decrease in protein yield and enzyme activity; dbSNP:rs534815243." evidence="22 26">
    <original>G</original>
    <variation>D</variation>
    <location>
        <position position="964"/>
    </location>
</feature>
<feature type="sequence variant" id="VAR_066113" description="In CPS1D." evidence="19">
    <original>V</original>
    <variation>E</variation>
    <location>
        <position position="978"/>
    </location>
</feature>
<feature type="sequence variant" id="VAR_063570" description="In CPS1D; dbSNP:rs121912595." evidence="14">
    <original>G</original>
    <variation>D</variation>
    <location>
        <position position="982"/>
    </location>
</feature>
<feature type="sequence variant" id="VAR_066162" description="In CPS1D; dbSNP:rs757059355." evidence="13">
    <original>G</original>
    <variation>S</variation>
    <location>
        <position position="982"/>
    </location>
</feature>
<feature type="sequence variant" id="VAR_066114" description="In CPS1D; dbSNP:rs121912595." evidence="19">
    <original>G</original>
    <variation>V</variation>
    <location>
        <position position="982"/>
    </location>
</feature>
<feature type="sequence variant" id="VAR_066115" description="In CPS1D." evidence="19">
    <original>Y</original>
    <variation>H</variation>
    <location>
        <position position="984"/>
    </location>
</feature>
<feature type="sequence variant" id="VAR_066116" description="In CPS1D; associated with V-304; dbSNP:rs1553516442." evidence="19">
    <original>I</original>
    <variation>T</variation>
    <location>
        <position position="986"/>
    </location>
</feature>
<feature type="sequence variant" id="VAR_066117" description="In CPS1D; may affect splicing; dbSNP:rs1553516443." evidence="19">
    <original>G</original>
    <variation>C</variation>
    <location>
        <position position="987"/>
    </location>
</feature>
<feature type="sequence variant" id="VAR_066118" description="In CPS1D; dbSNP:rs990390709." evidence="19">
    <original>F</original>
    <variation>S</variation>
    <location>
        <position position="992"/>
    </location>
</feature>
<feature type="sequence variant" id="VAR_066163" description="In CPS1D; dbSNP:rs1404696893." evidence="13">
    <original>S</original>
    <variation>F</variation>
    <location>
        <position position="998"/>
    </location>
</feature>
<feature type="sequence variant" id="VAR_066119" description="In CPS1D; dbSNP:rs749238466." evidence="19">
    <original>N</original>
    <variation>S</variation>
    <location>
        <position position="1016"/>
    </location>
</feature>
<feature type="sequence variant" id="VAR_066120" description="In CPS1D." evidence="19">
    <original>P</original>
    <variation>L</variation>
    <location>
        <position position="1017"/>
    </location>
</feature>
<feature type="sequence variant" id="VAR_066121" description="In CPS1D; dbSNP:rs1437651658." evidence="19">
    <original>T</original>
    <variation>I</variation>
    <location>
        <position position="1022"/>
    </location>
</feature>
<feature type="sequence variant" id="VAR_066122" description="In CPS1D." evidence="19">
    <original>E</original>
    <variation>G</variation>
    <location>
        <position position="1034"/>
    </location>
</feature>
<feature type="sequence variant" id="VAR_066123" description="In CPS1D; dbSNP:rs1241423400." evidence="19">
    <original>H</original>
    <variation>R</variation>
    <location>
        <position position="1045"/>
    </location>
</feature>
<feature type="sequence variant" id="VAR_066164" description="In CPS1D." evidence="5">
    <original>I</original>
    <variation>R</variation>
    <location>
        <position position="1054"/>
    </location>
</feature>
<feature type="sequence variant" id="VAR_066124" description="In CPS1D." evidence="19">
    <original>Q</original>
    <variation>R</variation>
    <location>
        <position position="1059"/>
    </location>
</feature>
<feature type="sequence variant" id="VAR_066125" description="In CPS1D; dbSNP:rs770471782." evidence="19">
    <original>A</original>
    <variation>E</variation>
    <location>
        <position position="1065"/>
    </location>
</feature>
<feature type="sequence variant" id="VAR_066126" description="In CPS1D; dbSNP:rs1392559810." evidence="19">
    <original>R</original>
    <variation>C</variation>
    <location>
        <position position="1089"/>
    </location>
</feature>
<feature type="sequence variant" id="VAR_066165" description="In CPS1D; dbSNP:rs1280211937." evidence="13">
    <original>R</original>
    <variation>L</variation>
    <location>
        <position position="1089"/>
    </location>
</feature>
<feature type="sequence variant" id="VAR_063571" description="In CPS1D." evidence="14">
    <original>Q</original>
    <variation>R</variation>
    <location>
        <position position="1103"/>
    </location>
</feature>
<feature type="sequence variant" id="VAR_063572" description="In CPS1D." evidence="14">
    <original>V</original>
    <variation>G</variation>
    <location>
        <position position="1141"/>
    </location>
</feature>
<feature type="sequence variant" id="VAR_066127" description="In CPS1D." evidence="19">
    <original>A</original>
    <variation>E</variation>
    <location>
        <position position="1155"/>
    </location>
</feature>
<feature type="sequence variant" id="VAR_066128" description="In CPS1D; dbSNP:rs766125631." evidence="19">
    <original>A</original>
    <variation>V</variation>
    <location>
        <position position="1155"/>
    </location>
</feature>
<feature type="sequence variant" id="VAR_075808" description="In CPS1D." evidence="22">
    <original>T</original>
    <variation>R</variation>
    <location>
        <position position="1167"/>
    </location>
</feature>
<feature type="sequence variant" id="VAR_075410" description="In CPS1D." evidence="26">
    <original>E</original>
    <variation>D</variation>
    <location>
        <position position="1194"/>
    </location>
</feature>
<feature type="sequence variant" id="VAR_063573" description="In CPS1D." evidence="14">
    <original>H</original>
    <variation>P</variation>
    <location>
        <position position="1195"/>
    </location>
</feature>
<feature type="sequence variant" id="VAR_066129" description="In CPS1D; dbSNP:rs149518280." evidence="19">
    <original>S</original>
    <variation>L</variation>
    <location>
        <position position="1203"/>
    </location>
</feature>
<feature type="sequence variant" id="VAR_066166" description="In CPS1D; dbSNP:rs1319489001." evidence="13">
    <original>S</original>
    <variation>P</variation>
    <location>
        <position position="1203"/>
    </location>
</feature>
<feature type="sequence variant" id="VAR_066167" description="In CPS1D." evidence="13">
    <original>D</original>
    <variation>N</variation>
    <location>
        <position position="1205"/>
    </location>
</feature>
<feature type="sequence variant" id="VAR_063574" description="In CPS1D; uncertain significance; dbSNP:rs141373204." evidence="14">
    <original>I</original>
    <variation>V</variation>
    <location>
        <position position="1215"/>
    </location>
</feature>
<feature type="sequence variant" id="VAR_066130" description="In CPS1D; dbSNP:rs778117194." evidence="19">
    <original>R</original>
    <variation>Q</variation>
    <location>
        <position position="1228"/>
    </location>
</feature>
<feature type="sequence variant" id="VAR_063575" description="In CPS1D." evidence="14">
    <original>N</original>
    <variation>K</variation>
    <location>
        <position position="1241"/>
    </location>
</feature>
<feature type="sequence variant" id="VAR_075411" description="In CPS1D; uncertain significance." evidence="27">
    <original>I</original>
    <variation>F</variation>
    <location>
        <position position="1254"/>
    </location>
</feature>
<feature type="sequence variant" id="VAR_066131" description="In CPS1D." evidence="19">
    <original>E</original>
    <variation>D</variation>
    <location>
        <position position="1255"/>
    </location>
</feature>
<feature type="sequence variant" id="VAR_066132" description="In CPS1D." evidence="19">
    <original>R</original>
    <variation>P</variation>
    <location>
        <position position="1262"/>
    </location>
</feature>
<feature type="sequence variant" id="VAR_066133" description="In CPS1D; dbSNP:rs750670270." evidence="19">
    <original>R</original>
    <variation>Q</variation>
    <location>
        <position position="1262"/>
    </location>
</feature>
<feature type="sequence variant" id="VAR_017566" description="In dbSNP:rs1047886." evidence="15">
    <original>F</original>
    <variation>S</variation>
    <location>
        <position position="1266"/>
    </location>
</feature>
<feature type="sequence variant" id="VAR_066134" description="In CPS1D." evidence="19">
    <original>D</original>
    <variation>H</variation>
    <location>
        <position position="1274"/>
    </location>
</feature>
<feature type="sequence variant" id="VAR_017567" description="In dbSNP:rs1047887." evidence="15">
    <original>M</original>
    <variation>L</variation>
    <location>
        <position position="1283"/>
    </location>
</feature>
<feature type="sequence variant" id="VAR_066135" description="In CPS1D." evidence="19">
    <original>C</original>
    <variation>R</variation>
    <location>
        <position position="1327"/>
    </location>
</feature>
<feature type="sequence variant" id="VAR_066168" description="In CPS1D." evidence="13">
    <original>S</original>
    <variation>P</variation>
    <location>
        <position position="1331"/>
    </location>
</feature>
<feature type="sequence variant" id="VAR_066136" description="In CPS1D; dbSNP:rs372645328." evidence="19">
    <original>G</original>
    <variation>E</variation>
    <location>
        <position position="1333"/>
    </location>
</feature>
<feature type="sequence variant" id="VAR_075412" description="In CPS1D; uncertain significance." evidence="27">
    <location>
        <begin position="1363"/>
        <end position="1366"/>
    </location>
</feature>
<feature type="sequence variant" id="VAR_066137" description="In CPS1D." evidence="19">
    <original>R</original>
    <variation>L</variation>
    <location>
        <position position="1371"/>
    </location>
</feature>
<feature type="sequence variant" id="VAR_017568" description="No functional consequences; no negative effect on protein stability, enzyme activity and thermal stability; dbSNP:rs140578009." evidence="9 18 23">
    <original>G</original>
    <variation>S</variation>
    <location>
        <position position="1376"/>
    </location>
</feature>
<feature type="sequence variant" id="VAR_066169" description="In CPS1D; significant reduction in thermal stability; dbSNP:rs1245373037." evidence="13 23">
    <original>A</original>
    <variation>T</variation>
    <location>
        <position position="1378"/>
    </location>
</feature>
<feature type="sequence variant" id="VAR_075413" description="In CPS1D; significant loss of protein stability." evidence="23">
    <original>L</original>
    <variation>S</variation>
    <location>
        <position position="1381"/>
    </location>
</feature>
<feature type="sequence variant" id="VAR_066138" description="In CPS1D; dbSNP:rs1392934477." evidence="19">
    <original>T</original>
    <variation>M</variation>
    <location>
        <position position="1391"/>
    </location>
</feature>
<feature type="sequence variant" id="VAR_066139" description="In CPS1D." evidence="19">
    <original>L</original>
    <variation>V</variation>
    <location>
        <position position="1398"/>
    </location>
</feature>
<feature type="sequence variant" id="VAR_017569" description="In dbSNP:rs1047891." evidence="6 9 10 15 17 20 24">
    <original>T</original>
    <variation>N</variation>
    <location>
        <position position="1406"/>
    </location>
</feature>
<feature type="sequence variant" id="VAR_064066" description="In CPS1D; modestly decreases enzyme activity; dbSNP:rs1202306773." evidence="13 18">
    <original>P</original>
    <variation>L</variation>
    <location>
        <position position="1411"/>
    </location>
</feature>
<feature type="sequence variant" id="VAR_066140" description="In CPS1D." evidence="19">
    <original>P</original>
    <variation>L</variation>
    <location>
        <position position="1439"/>
    </location>
</feature>
<feature type="sequence variant" id="VAR_066170" description="In CPS1D; almost complete loss of enzyme activity; approximately 10-fold decrease in the apparent Vmax for bicarbonate, ammonia and ATP; decreased affinity for NAG." evidence="13 23">
    <original>T</original>
    <variation>A</variation>
    <location>
        <position position="1443"/>
    </location>
</feature>
<feature type="sequence variant" id="VAR_064067" description="In CPS1D; the enzyme is inactive." evidence="18">
    <original>R</original>
    <variation>Q</variation>
    <location>
        <position position="1453"/>
    </location>
</feature>
<feature type="sequence variant" id="VAR_064068" description="In CPS1D; the enzyme is inactive; dbSNP:rs933813349." evidence="18 19">
    <original>R</original>
    <variation>W</variation>
    <location>
        <position position="1453"/>
    </location>
</feature>
<feature type="sequence variant" id="VAR_066141" description="In CPS1D." evidence="19 26">
    <original>P</original>
    <variation>R</variation>
    <location>
        <position position="1462"/>
    </location>
</feature>
<feature type="sequence variant" id="VAR_064069" description="In CPS1D; triggers a large decrease in the apparent affinity for N-acetyl-L-glutamate (NAG); dbSNP:rs1553519513." evidence="18">
    <original>Y</original>
    <variation>H</variation>
    <location>
        <position position="1491"/>
    </location>
</feature>
<feature type="sequence conflict" description="In Ref. 1; BAA14328." evidence="34" ref="1">
    <original>A</original>
    <variation>S</variation>
    <location>
        <position position="111"/>
    </location>
</feature>
<feature type="sequence conflict" description="In Ref. 1; BAA14328." evidence="34" ref="1">
    <original>R</original>
    <variation>Q</variation>
    <location>
        <position position="279"/>
    </location>
</feature>
<feature type="sequence conflict" description="In Ref. 1; BAA14328." evidence="34" ref="1">
    <original>G</original>
    <variation>C</variation>
    <location>
        <position position="338"/>
    </location>
</feature>
<feature type="sequence conflict" description="In Ref. 1; BAA14328." evidence="34" ref="1">
    <original>RLSRS</original>
    <variation>KMSPN</variation>
    <location>
        <begin position="718"/>
        <end position="722"/>
    </location>
</feature>
<feature type="sequence conflict" description="In Ref. 1; BAA14328." evidence="34" ref="1">
    <original>A</original>
    <variation>T</variation>
    <location>
        <position position="729"/>
    </location>
</feature>
<feature type="sequence conflict" description="In Ref. 1; BAA14328." evidence="34" ref="1">
    <original>E</original>
    <variation>G</variation>
    <location>
        <position position="749"/>
    </location>
</feature>
<feature type="sequence conflict" description="In Ref. 6; CAE45707." evidence="34" ref="6">
    <original>F</original>
    <variation>L</variation>
    <location>
        <position position="912"/>
    </location>
</feature>
<feature type="sequence conflict" description="In Ref. 1; BAA14328." evidence="34" ref="1">
    <original>EH</original>
    <variation>AT</variation>
    <location>
        <begin position="1161"/>
        <end position="1162"/>
    </location>
</feature>
<feature type="sequence conflict" description="In Ref. 1; BAA14328." evidence="34" ref="1">
    <original>GD</original>
    <variation>EN</variation>
    <location>
        <begin position="1204"/>
        <end position="1205"/>
    </location>
</feature>
<feature type="sequence conflict" description="In Ref. 1; BAA14328." evidence="34" ref="1">
    <original>I</original>
    <variation>N</variation>
    <location>
        <position position="1254"/>
    </location>
</feature>
<feature type="sequence conflict" description="In Ref. 1; BAA14328." evidence="34" ref="1">
    <original>A</original>
    <variation>V</variation>
    <location>
        <position position="1303"/>
    </location>
</feature>
<feature type="strand" evidence="40">
    <location>
        <begin position="45"/>
        <end position="50"/>
    </location>
</feature>
<feature type="strand" evidence="40">
    <location>
        <begin position="55"/>
        <end position="60"/>
    </location>
</feature>
<feature type="strand" evidence="40">
    <location>
        <begin position="67"/>
        <end position="74"/>
    </location>
</feature>
<feature type="helix" evidence="40">
    <location>
        <begin position="80"/>
        <end position="84"/>
    </location>
</feature>
<feature type="helix" evidence="40">
    <location>
        <begin position="87"/>
        <end position="89"/>
    </location>
</feature>
<feature type="strand" evidence="40">
    <location>
        <begin position="92"/>
        <end position="101"/>
    </location>
</feature>
<feature type="strand" evidence="40">
    <location>
        <begin position="116"/>
        <end position="120"/>
    </location>
</feature>
<feature type="strand" evidence="40">
    <location>
        <begin position="122"/>
        <end position="125"/>
    </location>
</feature>
<feature type="strand" evidence="40">
    <location>
        <begin position="128"/>
        <end position="132"/>
    </location>
</feature>
<feature type="strand" evidence="40">
    <location>
        <begin position="134"/>
        <end position="136"/>
    </location>
</feature>
<feature type="helix" evidence="40">
    <location>
        <begin position="149"/>
        <end position="155"/>
    </location>
</feature>
<feature type="strand" evidence="40">
    <location>
        <begin position="160"/>
        <end position="163"/>
    </location>
</feature>
<feature type="helix" evidence="40">
    <location>
        <begin position="166"/>
        <end position="173"/>
    </location>
</feature>
<feature type="strand" evidence="40">
    <location>
        <begin position="179"/>
        <end position="184"/>
    </location>
</feature>
<feature type="helix" evidence="40">
    <location>
        <begin position="195"/>
        <end position="197"/>
    </location>
</feature>
<feature type="helix" evidence="40">
    <location>
        <begin position="200"/>
        <end position="204"/>
    </location>
</feature>
<feature type="strand" evidence="40">
    <location>
        <begin position="210"/>
        <end position="213"/>
    </location>
</feature>
<feature type="strand" evidence="40">
    <location>
        <begin position="217"/>
        <end position="226"/>
    </location>
</feature>
<feature type="helix" evidence="40">
    <location>
        <begin position="229"/>
        <end position="237"/>
    </location>
</feature>
<feature type="strand" evidence="40">
    <location>
        <begin position="240"/>
        <end position="245"/>
    </location>
</feature>
<feature type="strand" evidence="40">
    <location>
        <begin position="257"/>
        <end position="263"/>
    </location>
</feature>
<feature type="helix" evidence="40">
    <location>
        <begin position="268"/>
        <end position="270"/>
    </location>
</feature>
<feature type="helix" evidence="40">
    <location>
        <begin position="272"/>
        <end position="283"/>
    </location>
</feature>
<feature type="strand" evidence="40">
    <location>
        <begin position="290"/>
        <end position="294"/>
    </location>
</feature>
<feature type="helix" evidence="40">
    <location>
        <begin position="295"/>
        <end position="304"/>
    </location>
</feature>
<feature type="strand" evidence="40">
    <location>
        <begin position="308"/>
        <end position="324"/>
    </location>
</feature>
<feature type="turn" evidence="40">
    <location>
        <begin position="325"/>
        <end position="327"/>
    </location>
</feature>
<feature type="strand" evidence="40">
    <location>
        <begin position="330"/>
        <end position="341"/>
    </location>
</feature>
<feature type="strand" evidence="40">
    <location>
        <begin position="349"/>
        <end position="351"/>
    </location>
</feature>
<feature type="strand" evidence="40">
    <location>
        <begin position="353"/>
        <end position="355"/>
    </location>
</feature>
<feature type="turn" evidence="40">
    <location>
        <begin position="356"/>
        <end position="358"/>
    </location>
</feature>
<feature type="strand" evidence="40">
    <location>
        <begin position="363"/>
        <end position="376"/>
    </location>
</feature>
<feature type="strand" evidence="40">
    <location>
        <begin position="381"/>
        <end position="383"/>
    </location>
</feature>
<feature type="helix" evidence="40">
    <location>
        <begin position="389"/>
        <end position="399"/>
    </location>
</feature>
<feature type="helix" evidence="40">
    <location>
        <begin position="405"/>
        <end position="408"/>
    </location>
</feature>
<feature type="strand" evidence="40">
    <location>
        <begin position="423"/>
        <end position="428"/>
    </location>
</feature>
<feature type="strand" evidence="38">
    <location>
        <begin position="435"/>
        <end position="437"/>
    </location>
</feature>
<feature type="helix" evidence="40">
    <location>
        <begin position="445"/>
        <end position="454"/>
    </location>
</feature>
<feature type="strand" evidence="40">
    <location>
        <begin position="458"/>
        <end position="462"/>
    </location>
</feature>
<feature type="helix" evidence="40">
    <location>
        <begin position="469"/>
        <end position="471"/>
    </location>
</feature>
<feature type="strand" evidence="39">
    <location>
        <begin position="473"/>
        <end position="475"/>
    </location>
</feature>
<feature type="strand" evidence="40">
    <location>
        <begin position="480"/>
        <end position="483"/>
    </location>
</feature>
<feature type="helix" evidence="40">
    <location>
        <begin position="489"/>
        <end position="499"/>
    </location>
</feature>
<feature type="strand" evidence="40">
    <location>
        <begin position="502"/>
        <end position="505"/>
    </location>
</feature>
<feature type="strand" evidence="40">
    <location>
        <begin position="507"/>
        <end position="509"/>
    </location>
</feature>
<feature type="helix" evidence="40">
    <location>
        <begin position="510"/>
        <end position="522"/>
    </location>
</feature>
<feature type="helix" evidence="40">
    <location>
        <begin position="525"/>
        <end position="529"/>
    </location>
</feature>
<feature type="helix" evidence="40">
    <location>
        <begin position="538"/>
        <end position="545"/>
    </location>
</feature>
<feature type="helix" evidence="40">
    <location>
        <begin position="547"/>
        <end position="555"/>
    </location>
</feature>
<feature type="turn" evidence="40">
    <location>
        <begin position="556"/>
        <end position="558"/>
    </location>
</feature>
<feature type="strand" evidence="39">
    <location>
        <begin position="563"/>
        <end position="569"/>
    </location>
</feature>
<feature type="helix" evidence="39">
    <location>
        <begin position="570"/>
        <end position="580"/>
    </location>
</feature>
<feature type="strand" evidence="39">
    <location>
        <begin position="582"/>
        <end position="590"/>
    </location>
</feature>
<feature type="turn" evidence="39">
    <location>
        <begin position="593"/>
        <end position="596"/>
    </location>
</feature>
<feature type="strand" evidence="39">
    <location>
        <begin position="598"/>
        <end position="602"/>
    </location>
</feature>
<feature type="helix" evidence="39">
    <location>
        <begin position="603"/>
        <end position="614"/>
    </location>
</feature>
<feature type="strand" evidence="39">
    <location>
        <begin position="620"/>
        <end position="624"/>
    </location>
</feature>
<feature type="strand" evidence="40">
    <location>
        <begin position="629"/>
        <end position="638"/>
    </location>
</feature>
<feature type="strand" evidence="40">
    <location>
        <begin position="644"/>
        <end position="655"/>
    </location>
</feature>
<feature type="helix" evidence="39">
    <location>
        <begin position="660"/>
        <end position="662"/>
    </location>
</feature>
<feature type="strand" evidence="40">
    <location>
        <begin position="663"/>
        <end position="668"/>
    </location>
</feature>
<feature type="helix" evidence="40">
    <location>
        <begin position="674"/>
        <end position="690"/>
    </location>
</feature>
<feature type="strand" evidence="40">
    <location>
        <begin position="695"/>
        <end position="703"/>
    </location>
</feature>
<feature type="strand" evidence="40">
    <location>
        <begin position="710"/>
        <end position="716"/>
    </location>
</feature>
<feature type="helix" evidence="40">
    <location>
        <begin position="721"/>
        <end position="730"/>
    </location>
</feature>
<feature type="helix" evidence="40">
    <location>
        <begin position="734"/>
        <end position="742"/>
    </location>
</feature>
<feature type="helix" evidence="40">
    <location>
        <begin position="747"/>
        <end position="749"/>
    </location>
</feature>
<feature type="turn" evidence="40">
    <location>
        <begin position="753"/>
        <end position="755"/>
    </location>
</feature>
<feature type="strand" evidence="40">
    <location>
        <begin position="756"/>
        <end position="762"/>
    </location>
</feature>
<feature type="strand" evidence="40">
    <location>
        <begin position="767"/>
        <end position="777"/>
    </location>
</feature>
<feature type="strand" evidence="40">
    <location>
        <begin position="794"/>
        <end position="804"/>
    </location>
</feature>
<feature type="helix" evidence="40">
    <location>
        <begin position="805"/>
        <end position="816"/>
    </location>
</feature>
<feature type="helix" evidence="38">
    <location>
        <begin position="828"/>
        <end position="830"/>
    </location>
</feature>
<feature type="helix" evidence="40">
    <location>
        <begin position="839"/>
        <end position="844"/>
    </location>
</feature>
<feature type="helix" evidence="40">
    <location>
        <begin position="850"/>
        <end position="859"/>
    </location>
</feature>
<feature type="helix" evidence="40">
    <location>
        <begin position="864"/>
        <end position="871"/>
    </location>
</feature>
<feature type="helix" evidence="40">
    <location>
        <begin position="875"/>
        <end position="892"/>
    </location>
</feature>
<feature type="turn" evidence="40">
    <location>
        <begin position="896"/>
        <end position="898"/>
    </location>
</feature>
<feature type="helix" evidence="40">
    <location>
        <begin position="901"/>
        <end position="909"/>
    </location>
</feature>
<feature type="helix" evidence="40">
    <location>
        <begin position="914"/>
        <end position="921"/>
    </location>
</feature>
<feature type="helix" evidence="40">
    <location>
        <begin position="925"/>
        <end position="934"/>
    </location>
</feature>
<feature type="strand" evidence="40">
    <location>
        <begin position="940"/>
        <end position="943"/>
    </location>
</feature>
<feature type="strand" evidence="40">
    <location>
        <begin position="957"/>
        <end position="963"/>
    </location>
</feature>
<feature type="strand" evidence="40">
    <location>
        <begin position="976"/>
        <end position="979"/>
    </location>
</feature>
<feature type="helix" evidence="40">
    <location>
        <begin position="991"/>
        <end position="1005"/>
    </location>
</feature>
<feature type="strand" evidence="40">
    <location>
        <begin position="1010"/>
        <end position="1014"/>
    </location>
</feature>
<feature type="turn" evidence="40">
    <location>
        <begin position="1024"/>
        <end position="1026"/>
    </location>
</feature>
<feature type="strand" evidence="40">
    <location>
        <begin position="1027"/>
        <end position="1032"/>
    </location>
</feature>
<feature type="helix" evidence="40">
    <location>
        <begin position="1037"/>
        <end position="1047"/>
    </location>
</feature>
<feature type="strand" evidence="40">
    <location>
        <begin position="1050"/>
        <end position="1053"/>
    </location>
</feature>
<feature type="strand" evidence="40">
    <location>
        <begin position="1055"/>
        <end position="1057"/>
    </location>
</feature>
<feature type="helix" evidence="40">
    <location>
        <begin position="1059"/>
        <end position="1063"/>
    </location>
</feature>
<feature type="helix" evidence="40">
    <location>
        <begin position="1065"/>
        <end position="1070"/>
    </location>
</feature>
<feature type="helix" evidence="40">
    <location>
        <begin position="1080"/>
        <end position="1087"/>
    </location>
</feature>
<feature type="helix" evidence="40">
    <location>
        <begin position="1089"/>
        <end position="1098"/>
    </location>
</feature>
<feature type="strand" evidence="40">
    <location>
        <begin position="1106"/>
        <end position="1111"/>
    </location>
</feature>
<feature type="helix" evidence="40">
    <location>
        <begin position="1112"/>
        <end position="1121"/>
    </location>
</feature>
<feature type="strand" evidence="38">
    <location>
        <begin position="1126"/>
        <end position="1129"/>
    </location>
</feature>
<feature type="strand" evidence="38">
    <location>
        <begin position="1140"/>
        <end position="1142"/>
    </location>
</feature>
<feature type="helix" evidence="38">
    <location>
        <begin position="1145"/>
        <end position="1151"/>
    </location>
</feature>
<feature type="strand" evidence="40">
    <location>
        <begin position="1164"/>
        <end position="1168"/>
    </location>
</feature>
<feature type="strand" evidence="40">
    <location>
        <begin position="1174"/>
        <end position="1183"/>
    </location>
</feature>
<feature type="strand" evidence="40">
    <location>
        <begin position="1186"/>
        <end position="1197"/>
    </location>
</feature>
<feature type="strand" evidence="41">
    <location>
        <begin position="1199"/>
        <end position="1201"/>
    </location>
</feature>
<feature type="strand" evidence="40">
    <location>
        <begin position="1203"/>
        <end position="1205"/>
    </location>
</feature>
<feature type="strand" evidence="40">
    <location>
        <begin position="1208"/>
        <end position="1211"/>
    </location>
</feature>
<feature type="helix" evidence="40">
    <location>
        <begin position="1217"/>
        <end position="1233"/>
    </location>
</feature>
<feature type="strand" evidence="40">
    <location>
        <begin position="1238"/>
        <end position="1247"/>
    </location>
</feature>
<feature type="strand" evidence="40">
    <location>
        <begin position="1250"/>
        <end position="1259"/>
    </location>
</feature>
<feature type="helix" evidence="40">
    <location>
        <begin position="1264"/>
        <end position="1271"/>
    </location>
</feature>
<feature type="helix" evidence="40">
    <location>
        <begin position="1275"/>
        <end position="1284"/>
    </location>
</feature>
<feature type="strand" evidence="40">
    <location>
        <begin position="1296"/>
        <end position="1298"/>
    </location>
</feature>
<feature type="strand" evidence="40">
    <location>
        <begin position="1306"/>
        <end position="1310"/>
    </location>
</feature>
<feature type="strand" evidence="40">
    <location>
        <begin position="1312"/>
        <end position="1319"/>
    </location>
</feature>
<feature type="strand" evidence="40">
    <location>
        <begin position="1321"/>
        <end position="1324"/>
    </location>
</feature>
<feature type="strand" evidence="40">
    <location>
        <begin position="1326"/>
        <end position="1332"/>
    </location>
</feature>
<feature type="strand" evidence="40">
    <location>
        <begin position="1335"/>
        <end position="1341"/>
    </location>
</feature>
<feature type="helix" evidence="40">
    <location>
        <begin position="1342"/>
        <end position="1352"/>
    </location>
</feature>
<feature type="strand" evidence="40">
    <location>
        <begin position="1360"/>
        <end position="1365"/>
    </location>
</feature>
<feature type="helix" evidence="40">
    <location>
        <begin position="1368"/>
        <end position="1370"/>
    </location>
</feature>
<feature type="helix" evidence="40">
    <location>
        <begin position="1371"/>
        <end position="1383"/>
    </location>
</feature>
<feature type="strand" evidence="40">
    <location>
        <begin position="1387"/>
        <end position="1391"/>
    </location>
</feature>
<feature type="helix" evidence="40">
    <location>
        <begin position="1392"/>
        <end position="1400"/>
    </location>
</feature>
<feature type="strand" evidence="40">
    <location>
        <begin position="1406"/>
        <end position="1408"/>
    </location>
</feature>
<feature type="helix" evidence="40">
    <location>
        <begin position="1411"/>
        <end position="1413"/>
    </location>
</feature>
<feature type="strand" evidence="38">
    <location>
        <begin position="1418"/>
        <end position="1421"/>
    </location>
</feature>
<feature type="helix" evidence="40">
    <location>
        <begin position="1423"/>
        <end position="1428"/>
    </location>
</feature>
<feature type="strand" evidence="40">
    <location>
        <begin position="1434"/>
        <end position="1437"/>
    </location>
</feature>
<feature type="helix" evidence="37">
    <location>
        <begin position="1443"/>
        <end position="1445"/>
    </location>
</feature>
<feature type="helix" evidence="40">
    <location>
        <begin position="1446"/>
        <end position="1459"/>
    </location>
</feature>
<feature type="helix" evidence="40">
    <location>
        <begin position="1467"/>
        <end position="1479"/>
    </location>
</feature>
<feature type="turn" evidence="38">
    <location>
        <begin position="1486"/>
        <end position="1491"/>
    </location>
</feature>
<feature type="sequence conflict" description="In Ref. 11; BAD92037." evidence="34" ref="11">
    <original>I</original>
    <variation>IF</variation>
    <location sequence="P31327-3">
        <position position="5"/>
    </location>
</feature>
<sequence length="1500" mass="164939">MTRILTAFKVVRTLKTGFGFTNVTAHQKWKFSRPGIRLLSVKAQTAHIVLEDGTKMKGYSFGHPSSVAGEVVFNTGLGGYPEAITDPAYKGQILTMANPIIGNGGAPDTTALDELGLSKYLESNGIKVSGLLVLDYSKDYNHWLATKSLGQWLQEEKVPAIYGVDTRMLTKIIRDKGTMLGKIEFEGQPVDFVDPNKQNLIAEVSTKDVKVYGKGNPTKVVAVDCGIKNNVIRLLVKRGAEVHLVPWNHDFTKMEYDGILIAGGPGNPALAEPLIQNVRKILESDRKEPLFGISTGNLITGLAAGAKTYKMSMANRGQNQPVLNITNKQAFITAQNHGYALDNTLPAGWKPLFVNVNDQTNEGIMHESKPFFAVQFHPEVTPGPIDTEYLFDSFFSLIKKGKATTITSVLPKPALVASRVEVSKVLILGSGGLSIGQAGEFDYSGSQAVKAMKEENVKTVLMNPNIASVQTNEVGLKQADTVYFLPITPQFVTEVIKAEQPDGLILGMGGQTALNCGVELFKRGVLKEYGVKVLGTSVESIMATEDRQLFSDKLNEINEKIAPSFAVESIEDALKAADTIGYPVMIRSAYALGGLGSGICPNRETLMDLSTKAFAMTNQILVEKSVTGWKEIEYEVVRDADDNCVTVCNMENVDAMGVHTGDSVVVAPAQTLSNAEFQMLRRTSINVVRHLGIVGECNIQFALHPTSMEYCIIEVNARLSRSSALASKATGYPLAFIAAKIALGIPLPEIKNVVSGKTSACFEPSLDYMVTKIPRWDLDRFHGTSSRIGSSMKSVGEVMAIGRTFEESFQKALRMCHPSIEGFTPRLPMNKEWPSNLDLRKELSEPSSTRIYAIAKAIDDNMSLDEIEKLTYIDKWFLYKMRDILNMEKTLKGLNSESMTEETLKRAKEIGFSDKQISKCLGLTEAQTRELRLKKNIHPWVKQIDTLAAEYPSVTNYLYVTYNGQEHDVNFDDHGMMVLGCGPYHIGSSVEFDWCAVSSIRTLRQLGKKTVVVNCNPETVSTDFDECDKLYFEELSLERILDIYHQEACGGCIISVGGQIPNNLAVPLYKNGVKIMGTSPLQIDRAEDRSIFSAVLDELKVAQAPWKAVNTLNEALEFAKSVDYPCLLRPSYVLSGSAMNVVFSEDEMKKFLEEATRVSQEHPVVLTKFVEGAREVEMDAVGKDGRVISHAISEHVEDAGVHSGDATLMLPTQTISQGAIEKVKDATRKIAKAFAISGPFNVQFLVKGNDVLVIECNLRASRSFPFVSKTLGVDFIDVATKVMIGENVDEKHLPTLDHPIIPADYVAIKAPMFSWPRLRDADPILRCEMASTGEVACFGEGIHTAFLKAMLSTGFKIPQKGILIGIQQSFRPRFLGVAEQLHNEGFKLFATEATSDWLNANNVPATPVAWPSQEGQNPSLSSIRKLIRDGSIDLVINLPNNNTKFVHDNYVIRRTAVDSGIPLLTNFQVTKLFAEAVQKSRKVDSKSLFHYRQYSAGKAA</sequence>
<reference key="1">
    <citation type="journal article" date="1991" name="Gene">
        <title>Cloning and sequence of a cDNA encoding human carbamyl phosphate synthetase I: molecular analysis of hyperammonemia.</title>
        <authorList>
            <person name="Haraguchi Y."/>
            <person name="Uchino T."/>
            <person name="Takiguchi M."/>
            <person name="Endo F."/>
            <person name="Mori M."/>
            <person name="Matsuda I."/>
        </authorList>
    </citation>
    <scope>NUCLEOTIDE SEQUENCE [MRNA] (ISOFORM 1)</scope>
    <scope>VARIANTS SER-1266; LEU-1283 AND ASN-1406</scope>
    <source>
        <tissue>Liver</tissue>
    </source>
</reference>
<reference key="2">
    <citation type="journal article" date="1998" name="Hum. Mutat.">
        <title>Prenatal diagnosis of carbamoyl phosphate synthetase I deficiency by identification of a missense mutation in CPS1.</title>
        <authorList>
            <person name="Finckh U."/>
            <person name="Kohlschuetter A."/>
            <person name="Schaefer H."/>
            <person name="Sperhake K."/>
            <person name="Colombo J.-P."/>
            <person name="Gal A."/>
        </authorList>
    </citation>
    <scope>NUCLEOTIDE SEQUENCE [MRNA] (ISOFORM 1)</scope>
    <scope>VARIANT CPS1D MET-544</scope>
    <scope>VARIANT ALA-344</scope>
    <source>
        <tissue>Liver</tissue>
    </source>
</reference>
<reference key="3">
    <citation type="journal article" date="2003" name="Gene">
        <title>Characterization of genomic structure and polymorphisms in the human carbamyl phosphate synthetase I gene.</title>
        <authorList>
            <person name="Summar M.L."/>
            <person name="Hall L.D."/>
            <person name="Eeds A.M."/>
            <person name="Hutcheson H.B."/>
            <person name="Kuo A.N."/>
            <person name="Willis A.S."/>
            <person name="Rubio V."/>
            <person name="Arvin M.K."/>
            <person name="Schofield J.P."/>
            <person name="Dawson E.P."/>
        </authorList>
    </citation>
    <scope>NUCLEOTIDE SEQUENCE [MRNA] (ISOFORM 1)</scope>
    <scope>VARIANTS ALA-344; SER-1376 AND ASN-1406</scope>
</reference>
<reference key="4">
    <citation type="submission" date="2003-06" db="EMBL/GenBank/DDBJ databases">
        <title>Cloning of an isoform of CPS1 gene related to spermatogenesis.</title>
        <authorList>
            <person name="Huo R."/>
            <person name="Zhu H."/>
            <person name="Huang X.Y."/>
            <person name="Xu Z.Y."/>
            <person name="Lu L."/>
            <person name="Xu M."/>
            <person name="Yin L.L."/>
            <person name="Li J.M."/>
            <person name="Zhou Z.M."/>
            <person name="Sha J.H."/>
        </authorList>
    </citation>
    <scope>NUCLEOTIDE SEQUENCE [MRNA] (ISOFORM 2)</scope>
    <source>
        <tissue>Testis</tissue>
    </source>
</reference>
<reference key="5">
    <citation type="journal article" date="2003" name="Hum. Mutat.">
        <title>Structural organization of the human carbamyl phosphate synthetase I gene (CPS1) and identification of two novel genetic lesions.</title>
        <authorList>
            <person name="Funghini S."/>
            <person name="Donati M.A."/>
            <person name="Pasquini E."/>
            <person name="Zammarchi E."/>
            <person name="Morrone A."/>
        </authorList>
    </citation>
    <scope>NUCLEOTIDE SEQUENCE [GENOMIC DNA] (ISOFORM 1)</scope>
    <scope>VARIANTS CPS1D GLY-457 AND ARG-810</scope>
    <scope>VARIANT ASN-1406</scope>
</reference>
<reference key="6">
    <citation type="journal article" date="2003" name="Hum. Mutat.">
        <title>Gene structure of human carbamylphosphate synthetase 1 and novel mutations in patients with neonatal onset.</title>
        <authorList>
            <person name="Haeberle J."/>
            <person name="Schmidt E."/>
            <person name="Pauli S."/>
            <person name="Rapp B."/>
            <person name="Christensen E."/>
            <person name="Wermuth B."/>
            <person name="Koch H.G."/>
        </authorList>
    </citation>
    <scope>NUCLEOTIDE SEQUENCE [GENOMIC DNA] (ISOFORM 1)</scope>
    <scope>VARIANT CPS1D SER-843</scope>
    <scope>VARIANT GLU-875</scope>
</reference>
<reference key="7">
    <citation type="journal article" date="2004" name="Nat. Genet.">
        <title>Complete sequencing and characterization of 21,243 full-length human cDNAs.</title>
        <authorList>
            <person name="Ota T."/>
            <person name="Suzuki Y."/>
            <person name="Nishikawa T."/>
            <person name="Otsuki T."/>
            <person name="Sugiyama T."/>
            <person name="Irie R."/>
            <person name="Wakamatsu A."/>
            <person name="Hayashi K."/>
            <person name="Sato H."/>
            <person name="Nagai K."/>
            <person name="Kimura K."/>
            <person name="Makita H."/>
            <person name="Sekine M."/>
            <person name="Obayashi M."/>
            <person name="Nishi T."/>
            <person name="Shibahara T."/>
            <person name="Tanaka T."/>
            <person name="Ishii S."/>
            <person name="Yamamoto J."/>
            <person name="Saito K."/>
            <person name="Kawai Y."/>
            <person name="Isono Y."/>
            <person name="Nakamura Y."/>
            <person name="Nagahari K."/>
            <person name="Murakami K."/>
            <person name="Yasuda T."/>
            <person name="Iwayanagi T."/>
            <person name="Wagatsuma M."/>
            <person name="Shiratori A."/>
            <person name="Sudo H."/>
            <person name="Hosoiri T."/>
            <person name="Kaku Y."/>
            <person name="Kodaira H."/>
            <person name="Kondo H."/>
            <person name="Sugawara M."/>
            <person name="Takahashi M."/>
            <person name="Kanda K."/>
            <person name="Yokoi T."/>
            <person name="Furuya T."/>
            <person name="Kikkawa E."/>
            <person name="Omura Y."/>
            <person name="Abe K."/>
            <person name="Kamihara K."/>
            <person name="Katsuta N."/>
            <person name="Sato K."/>
            <person name="Tanikawa M."/>
            <person name="Yamazaki M."/>
            <person name="Ninomiya K."/>
            <person name="Ishibashi T."/>
            <person name="Yamashita H."/>
            <person name="Murakawa K."/>
            <person name="Fujimori K."/>
            <person name="Tanai H."/>
            <person name="Kimata M."/>
            <person name="Watanabe M."/>
            <person name="Hiraoka S."/>
            <person name="Chiba Y."/>
            <person name="Ishida S."/>
            <person name="Ono Y."/>
            <person name="Takiguchi S."/>
            <person name="Watanabe S."/>
            <person name="Yosida M."/>
            <person name="Hotuta T."/>
            <person name="Kusano J."/>
            <person name="Kanehori K."/>
            <person name="Takahashi-Fujii A."/>
            <person name="Hara H."/>
            <person name="Tanase T.-O."/>
            <person name="Nomura Y."/>
            <person name="Togiya S."/>
            <person name="Komai F."/>
            <person name="Hara R."/>
            <person name="Takeuchi K."/>
            <person name="Arita M."/>
            <person name="Imose N."/>
            <person name="Musashino K."/>
            <person name="Yuuki H."/>
            <person name="Oshima A."/>
            <person name="Sasaki N."/>
            <person name="Aotsuka S."/>
            <person name="Yoshikawa Y."/>
            <person name="Matsunawa H."/>
            <person name="Ichihara T."/>
            <person name="Shiohata N."/>
            <person name="Sano S."/>
            <person name="Moriya S."/>
            <person name="Momiyama H."/>
            <person name="Satoh N."/>
            <person name="Takami S."/>
            <person name="Terashima Y."/>
            <person name="Suzuki O."/>
            <person name="Nakagawa S."/>
            <person name="Senoh A."/>
            <person name="Mizoguchi H."/>
            <person name="Goto Y."/>
            <person name="Shimizu F."/>
            <person name="Wakebe H."/>
            <person name="Hishigaki H."/>
            <person name="Watanabe T."/>
            <person name="Sugiyama A."/>
            <person name="Takemoto M."/>
            <person name="Kawakami B."/>
            <person name="Yamazaki M."/>
            <person name="Watanabe K."/>
            <person name="Kumagai A."/>
            <person name="Itakura S."/>
            <person name="Fukuzumi Y."/>
            <person name="Fujimori Y."/>
            <person name="Komiyama M."/>
            <person name="Tashiro H."/>
            <person name="Tanigami A."/>
            <person name="Fujiwara T."/>
            <person name="Ono T."/>
            <person name="Yamada K."/>
            <person name="Fujii Y."/>
            <person name="Ozaki K."/>
            <person name="Hirao M."/>
            <person name="Ohmori Y."/>
            <person name="Kawabata A."/>
            <person name="Hikiji T."/>
            <person name="Kobatake N."/>
            <person name="Inagaki H."/>
            <person name="Ikema Y."/>
            <person name="Okamoto S."/>
            <person name="Okitani R."/>
            <person name="Kawakami T."/>
            <person name="Noguchi S."/>
            <person name="Itoh T."/>
            <person name="Shigeta K."/>
            <person name="Senba T."/>
            <person name="Matsumura K."/>
            <person name="Nakajima Y."/>
            <person name="Mizuno T."/>
            <person name="Morinaga M."/>
            <person name="Sasaki M."/>
            <person name="Togashi T."/>
            <person name="Oyama M."/>
            <person name="Hata H."/>
            <person name="Watanabe M."/>
            <person name="Komatsu T."/>
            <person name="Mizushima-Sugano J."/>
            <person name="Satoh T."/>
            <person name="Shirai Y."/>
            <person name="Takahashi Y."/>
            <person name="Nakagawa K."/>
            <person name="Okumura K."/>
            <person name="Nagase T."/>
            <person name="Nomura N."/>
            <person name="Kikuchi H."/>
            <person name="Masuho Y."/>
            <person name="Yamashita R."/>
            <person name="Nakai K."/>
            <person name="Yada T."/>
            <person name="Nakamura Y."/>
            <person name="Ohara O."/>
            <person name="Isogai T."/>
            <person name="Sugano S."/>
        </authorList>
    </citation>
    <scope>NUCLEOTIDE SEQUENCE [LARGE SCALE MRNA] (ISOFORM 2)</scope>
    <source>
        <tissue>Testis</tissue>
    </source>
</reference>
<reference key="8">
    <citation type="journal article" date="2005" name="Nature">
        <title>Generation and annotation of the DNA sequences of human chromosomes 2 and 4.</title>
        <authorList>
            <person name="Hillier L.W."/>
            <person name="Graves T.A."/>
            <person name="Fulton R.S."/>
            <person name="Fulton L.A."/>
            <person name="Pepin K.H."/>
            <person name="Minx P."/>
            <person name="Wagner-McPherson C."/>
            <person name="Layman D."/>
            <person name="Wylie K."/>
            <person name="Sekhon M."/>
            <person name="Becker M.C."/>
            <person name="Fewell G.A."/>
            <person name="Delehaunty K.D."/>
            <person name="Miner T.L."/>
            <person name="Nash W.E."/>
            <person name="Kremitzki C."/>
            <person name="Oddy L."/>
            <person name="Du H."/>
            <person name="Sun H."/>
            <person name="Bradshaw-Cordum H."/>
            <person name="Ali J."/>
            <person name="Carter J."/>
            <person name="Cordes M."/>
            <person name="Harris A."/>
            <person name="Isak A."/>
            <person name="van Brunt A."/>
            <person name="Nguyen C."/>
            <person name="Du F."/>
            <person name="Courtney L."/>
            <person name="Kalicki J."/>
            <person name="Ozersky P."/>
            <person name="Abbott S."/>
            <person name="Armstrong J."/>
            <person name="Belter E.A."/>
            <person name="Caruso L."/>
            <person name="Cedroni M."/>
            <person name="Cotton M."/>
            <person name="Davidson T."/>
            <person name="Desai A."/>
            <person name="Elliott G."/>
            <person name="Erb T."/>
            <person name="Fronick C."/>
            <person name="Gaige T."/>
            <person name="Haakenson W."/>
            <person name="Haglund K."/>
            <person name="Holmes A."/>
            <person name="Harkins R."/>
            <person name="Kim K."/>
            <person name="Kruchowski S.S."/>
            <person name="Strong C.M."/>
            <person name="Grewal N."/>
            <person name="Goyea E."/>
            <person name="Hou S."/>
            <person name="Levy A."/>
            <person name="Martinka S."/>
            <person name="Mead K."/>
            <person name="McLellan M.D."/>
            <person name="Meyer R."/>
            <person name="Randall-Maher J."/>
            <person name="Tomlinson C."/>
            <person name="Dauphin-Kohlberg S."/>
            <person name="Kozlowicz-Reilly A."/>
            <person name="Shah N."/>
            <person name="Swearengen-Shahid S."/>
            <person name="Snider J."/>
            <person name="Strong J.T."/>
            <person name="Thompson J."/>
            <person name="Yoakum M."/>
            <person name="Leonard S."/>
            <person name="Pearman C."/>
            <person name="Trani L."/>
            <person name="Radionenko M."/>
            <person name="Waligorski J.E."/>
            <person name="Wang C."/>
            <person name="Rock S.M."/>
            <person name="Tin-Wollam A.-M."/>
            <person name="Maupin R."/>
            <person name="Latreille P."/>
            <person name="Wendl M.C."/>
            <person name="Yang S.-P."/>
            <person name="Pohl C."/>
            <person name="Wallis J.W."/>
            <person name="Spieth J."/>
            <person name="Bieri T.A."/>
            <person name="Berkowicz N."/>
            <person name="Nelson J.O."/>
            <person name="Osborne J."/>
            <person name="Ding L."/>
            <person name="Meyer R."/>
            <person name="Sabo A."/>
            <person name="Shotland Y."/>
            <person name="Sinha P."/>
            <person name="Wohldmann P.E."/>
            <person name="Cook L.L."/>
            <person name="Hickenbotham M.T."/>
            <person name="Eldred J."/>
            <person name="Williams D."/>
            <person name="Jones T.A."/>
            <person name="She X."/>
            <person name="Ciccarelli F.D."/>
            <person name="Izaurralde E."/>
            <person name="Taylor J."/>
            <person name="Schmutz J."/>
            <person name="Myers R.M."/>
            <person name="Cox D.R."/>
            <person name="Huang X."/>
            <person name="McPherson J.D."/>
            <person name="Mardis E.R."/>
            <person name="Clifton S.W."/>
            <person name="Warren W.C."/>
            <person name="Chinwalla A.T."/>
            <person name="Eddy S.R."/>
            <person name="Marra M.A."/>
            <person name="Ovcharenko I."/>
            <person name="Furey T.S."/>
            <person name="Miller W."/>
            <person name="Eichler E.E."/>
            <person name="Bork P."/>
            <person name="Suyama M."/>
            <person name="Torrents D."/>
            <person name="Waterston R.H."/>
            <person name="Wilson R.K."/>
        </authorList>
    </citation>
    <scope>NUCLEOTIDE SEQUENCE [LARGE SCALE GENOMIC DNA]</scope>
</reference>
<reference key="9">
    <citation type="submission" date="2005-07" db="EMBL/GenBank/DDBJ databases">
        <authorList>
            <person name="Mural R.J."/>
            <person name="Istrail S."/>
            <person name="Sutton G."/>
            <person name="Florea L."/>
            <person name="Halpern A.L."/>
            <person name="Mobarry C.M."/>
            <person name="Lippert R."/>
            <person name="Walenz B."/>
            <person name="Shatkay H."/>
            <person name="Dew I."/>
            <person name="Miller J.R."/>
            <person name="Flanigan M.J."/>
            <person name="Edwards N.J."/>
            <person name="Bolanos R."/>
            <person name="Fasulo D."/>
            <person name="Halldorsson B.V."/>
            <person name="Hannenhalli S."/>
            <person name="Turner R."/>
            <person name="Yooseph S."/>
            <person name="Lu F."/>
            <person name="Nusskern D.R."/>
            <person name="Shue B.C."/>
            <person name="Zheng X.H."/>
            <person name="Zhong F."/>
            <person name="Delcher A.L."/>
            <person name="Huson D.H."/>
            <person name="Kravitz S.A."/>
            <person name="Mouchard L."/>
            <person name="Reinert K."/>
            <person name="Remington K.A."/>
            <person name="Clark A.G."/>
            <person name="Waterman M.S."/>
            <person name="Eichler E.E."/>
            <person name="Adams M.D."/>
            <person name="Hunkapiller M.W."/>
            <person name="Myers E.W."/>
            <person name="Venter J.C."/>
        </authorList>
    </citation>
    <scope>NUCLEOTIDE SEQUENCE [LARGE SCALE GENOMIC DNA]</scope>
</reference>
<reference key="10">
    <citation type="journal article" date="2004" name="Genome Res.">
        <title>The status, quality, and expansion of the NIH full-length cDNA project: the Mammalian Gene Collection (MGC).</title>
        <authorList>
            <consortium name="The MGC Project Team"/>
        </authorList>
    </citation>
    <scope>NUCLEOTIDE SEQUENCE [LARGE SCALE MRNA] (ISOFORM 1)</scope>
</reference>
<reference key="11">
    <citation type="submission" date="2005-03" db="EMBL/GenBank/DDBJ databases">
        <title>Homo sapiens protein coding cDNA.</title>
        <authorList>
            <person name="Totoki Y."/>
            <person name="Toyoda A."/>
            <person name="Takeda T."/>
            <person name="Sakaki Y."/>
            <person name="Tanaka A."/>
            <person name="Yokoyama S."/>
            <person name="Ohara O."/>
            <person name="Nagase T."/>
            <person name="Kikuno R.F."/>
        </authorList>
    </citation>
    <scope>NUCLEOTIDE SEQUENCE [LARGE SCALE MRNA] (ISOFORM 3)</scope>
    <scope>VARIANT ALA-344</scope>
    <source>
        <tissue>Brain</tissue>
    </source>
</reference>
<reference key="12">
    <citation type="journal article" date="2007" name="BMC Genomics">
        <title>The full-ORF clone resource of the German cDNA consortium.</title>
        <authorList>
            <person name="Bechtel S."/>
            <person name="Rosenfelder H."/>
            <person name="Duda A."/>
            <person name="Schmidt C.P."/>
            <person name="Ernst U."/>
            <person name="Wellenreuther R."/>
            <person name="Mehrle A."/>
            <person name="Schuster C."/>
            <person name="Bahr A."/>
            <person name="Bloecker H."/>
            <person name="Heubner D."/>
            <person name="Hoerlein A."/>
            <person name="Michel G."/>
            <person name="Wedler H."/>
            <person name="Koehrer K."/>
            <person name="Ottenwaelder B."/>
            <person name="Poustka A."/>
            <person name="Wiemann S."/>
            <person name="Schupp I."/>
        </authorList>
    </citation>
    <scope>NUCLEOTIDE SEQUENCE [LARGE SCALE MRNA] OF 795-1500</scope>
    <source>
        <tissue>Small intestine</tissue>
    </source>
</reference>
<reference key="13">
    <citation type="journal article" date="2009" name="Biochem. J.">
        <title>Structural insight on the control of urea synthesis: identification of the binding site for N-acetyl-L-glutamate, the essential allosteric activator of mitochondrial carbamoyl phosphate synthetase.</title>
        <authorList>
            <person name="Pekkala S."/>
            <person name="Martinez A.I."/>
            <person name="Barcelona B."/>
            <person name="Gallego J."/>
            <person name="Bendala E."/>
            <person name="Yefimenko I."/>
            <person name="Rubio V."/>
            <person name="Cervera J."/>
        </authorList>
    </citation>
    <scope>ALLOSTERIC ACTIVATOR NAG BINDING SITE</scope>
</reference>
<reference key="14">
    <citation type="journal article" date="2011" name="BMC Syst. Biol.">
        <title>Initial characterization of the human central proteome.</title>
        <authorList>
            <person name="Burkard T.R."/>
            <person name="Planyavsky M."/>
            <person name="Kaupe I."/>
            <person name="Breitwieser F.P."/>
            <person name="Buerckstuemmer T."/>
            <person name="Bennett K.L."/>
            <person name="Superti-Furga G."/>
            <person name="Colinge J."/>
        </authorList>
    </citation>
    <scope>IDENTIFICATION BY MASS SPECTROMETRY [LARGE SCALE ANALYSIS]</scope>
</reference>
<reference key="15">
    <citation type="journal article" date="2012" name="Mol. Cell. Proteomics">
        <title>Systematic analysis of protein pools, isoforms, and modifications affecting turnover and subcellular localization.</title>
        <authorList>
            <person name="Ahmad Y."/>
            <person name="Boisvert F.M."/>
            <person name="Lundberg E."/>
            <person name="Uhlen M."/>
            <person name="Lamond A.I."/>
        </authorList>
    </citation>
    <scope>SUBCELLULAR LOCATION [LARGE SCALE ANALYSIS]</scope>
</reference>
<reference key="16">
    <citation type="journal article" date="2013" name="J. Proteome Res.">
        <title>Toward a comprehensive characterization of a human cancer cell phosphoproteome.</title>
        <authorList>
            <person name="Zhou H."/>
            <person name="Di Palma S."/>
            <person name="Preisinger C."/>
            <person name="Peng M."/>
            <person name="Polat A.N."/>
            <person name="Heck A.J."/>
            <person name="Mohammed S."/>
        </authorList>
    </citation>
    <scope>PHOSPHORYLATION [LARGE SCALE ANALYSIS] AT SER-1036 AND SER-1079</scope>
    <scope>IDENTIFICATION BY MASS SPECTROMETRY [LARGE SCALE ANALYSIS]</scope>
    <source>
        <tissue>Cervix carcinoma</tissue>
    </source>
</reference>
<reference key="17">
    <citation type="journal article" date="2014" name="Cell Metab.">
        <title>Lysine glutarylation is a protein posttranslational modification regulated by SIRT5.</title>
        <authorList>
            <person name="Tan M."/>
            <person name="Peng C."/>
            <person name="Anderson K.A."/>
            <person name="Chhoy P."/>
            <person name="Xie Z."/>
            <person name="Dai L."/>
            <person name="Park J."/>
            <person name="Chen Y."/>
            <person name="Huang H."/>
            <person name="Zhang Y."/>
            <person name="Ro J."/>
            <person name="Wagner G.R."/>
            <person name="Green M.F."/>
            <person name="Madsen A.S."/>
            <person name="Schmiesing J."/>
            <person name="Peterson B.S."/>
            <person name="Xu G."/>
            <person name="Ilkayeva O.R."/>
            <person name="Muehlbauer M.J."/>
            <person name="Braulke T."/>
            <person name="Muehlhausen C."/>
            <person name="Backos D.S."/>
            <person name="Olsen C.A."/>
            <person name="McGuire P.J."/>
            <person name="Pletcher S.D."/>
            <person name="Lombard D.B."/>
            <person name="Hirschey M.D."/>
            <person name="Zhao Y."/>
        </authorList>
    </citation>
    <scope>GLUTARYLATION AT LYS-55; LYS-171; LYS-176; LYS-207; LYS-210; LYS-214; LYS-219; LYS-228; LYS-237; LYS-280; LYS-307; LYS-310; LYS-402; LYS-412; LYS-453; LYS-458; LYS-527; LYS-532; LYS-553; LYS-728; LYS-757; LYS-772; LYS-793; LYS-811; LYS-841; LYS-856; LYS-869; LYS-875; LYS-889; LYS-892; LYS-905; LYS-908; LYS-915; LYS-919; LYS-1074; LYS-1150; LYS-1168; LYS-1183; LYS-1224; LYS-1356; LYS-1360; LYS-1479 AND LYS-1486</scope>
</reference>
<reference key="18">
    <citation type="journal article" date="2014" name="J. Proteomics">
        <title>An enzyme assisted RP-RPLC approach for in-depth analysis of human liver phosphoproteome.</title>
        <authorList>
            <person name="Bian Y."/>
            <person name="Song C."/>
            <person name="Cheng K."/>
            <person name="Dong M."/>
            <person name="Wang F."/>
            <person name="Huang J."/>
            <person name="Sun D."/>
            <person name="Wang L."/>
            <person name="Ye M."/>
            <person name="Zou H."/>
        </authorList>
    </citation>
    <scope>PHOSPHORYLATION [LARGE SCALE ANALYSIS] AT SER-148; SER-569; SER-835; SER-1079; SER-1203; SER-1419 AND SER-1431</scope>
    <scope>IDENTIFICATION BY MASS SPECTROMETRY [LARGE SCALE ANALYSIS]</scope>
    <source>
        <tissue>Liver</tissue>
    </source>
</reference>
<reference key="19">
    <citation type="submission" date="2009-02" db="PDB data bank">
        <title>Crystal structure of MGS domain of carbamoyl-phosphate synthetase from Homo sapiens.</title>
        <authorList>
            <consortium name="RIKEN structural genomics initiative (RSGI)"/>
        </authorList>
    </citation>
    <scope>X-RAY CRYSTALLOGRAPHY (1.98 ANGSTROMS) OF 1343-1478</scope>
</reference>
<reference key="20">
    <citation type="journal article" date="2001" name="Eur. J. Pediatr.">
        <title>Genetic analysis of carbamoylphosphate synthetase I and ornithine transcarbamylase deficiency using fibroblasts.</title>
        <authorList>
            <person name="Rapp B."/>
            <person name="Haberle J."/>
            <person name="Linnebank M."/>
            <person name="Wermuth B."/>
            <person name="Marquardt T."/>
            <person name="Harms E."/>
            <person name="Koch H.G."/>
        </authorList>
    </citation>
    <scope>VARIANT CPS1D ARG-1054</scope>
</reference>
<reference key="21">
    <citation type="journal article" date="2001" name="Hum. Hered.">
        <title>Novel mutations (H337R and 238-362del) in the CPS1 gene cause carbamoyl phosphate synthetase I deficiency.</title>
        <authorList>
            <person name="Aoshima T."/>
            <person name="Kajita M."/>
            <person name="Sekido Y."/>
            <person name="Kikuchi S."/>
            <person name="Yasuda I."/>
            <person name="Saheki T."/>
            <person name="Watanabe K."/>
            <person name="Shimokata K."/>
            <person name="Niwa T."/>
        </authorList>
    </citation>
    <scope>VARIANT CPS1D ARG-337</scope>
</reference>
<reference key="22">
    <citation type="journal article" date="2001" name="N. Engl. J. Med.">
        <title>Neonatal pulmonary hypertension -- urea-cycle intermediates, nitric oxide production, and carbamoyl-phosphate synthetase function.</title>
        <authorList>
            <person name="Pearson D.L."/>
            <person name="Dawling S."/>
            <person name="Walsh W.F."/>
            <person name="Haines J.L."/>
            <person name="Christman B.W."/>
            <person name="Bazyk A."/>
            <person name="Scott N."/>
            <person name="Summar M.L."/>
        </authorList>
    </citation>
    <scope>VARIANT ASN-1406</scope>
</reference>
<reference key="23">
    <citation type="journal article" date="2004" name="J. Inherit. Metab. Dis.">
        <title>Mutational analysis of carbamoylphosphate synthetase I deficiency in three Japanese patients.</title>
        <authorList>
            <person name="Wakutani Y."/>
            <person name="Nakayasu H."/>
            <person name="Takeshima T."/>
            <person name="Adachi M."/>
            <person name="Kawataki M."/>
            <person name="Kihira K."/>
            <person name="Sawada H."/>
            <person name="Bonno M."/>
            <person name="Yamamoto H."/>
            <person name="Nakashima K."/>
        </authorList>
    </citation>
    <scope>VARIANTS CPS1D HIS-850 AND PRO-918</scope>
</reference>
<reference key="24">
    <citation type="journal article" date="2004" name="Prenat. Diagn.">
        <title>Genetic approach to prenatal diagnosis in urea cycle defects.</title>
        <authorList>
            <person name="Haeberle J."/>
            <person name="Koch H.G."/>
        </authorList>
    </citation>
    <scope>VARIANT CPS1D SER-843</scope>
    <scope>VARIANT GLU-875</scope>
</reference>
<reference key="25">
    <citation type="journal article" date="2006" name="Mol. Genet. Metab.">
        <title>The frequent observation of evidence for nonsense-mediated decay in RNA from patients with carbamyl phosphate synthetase I deficiency.</title>
        <authorList>
            <person name="Eeds A.M."/>
            <person name="Hall L.D."/>
            <person name="Yadav M."/>
            <person name="Willis A."/>
            <person name="Summar S."/>
            <person name="Putnam A."/>
            <person name="Barr F."/>
            <person name="Summar M.L."/>
        </authorList>
    </citation>
    <scope>VARIANTS CPS1D GLU-301; CYS-389; ARG-390; THR-589; SER-640; LYS-716; LEU-805; VAL-911; PRO-958; SER-982; PHE-998; LEU-1089; PRO-1203; ASN-1205; PRO-1331; THR-1378; LEU-1411 AND ALA-1443</scope>
</reference>
<reference key="26">
    <citation type="journal article" date="2007" name="J. Hum. Genet.">
        <title>Molecular and clinical analyses of Japanese patients with carbamoylphosphate synthetase 1 (CPS1) deficiency.</title>
        <authorList>
            <person name="Kurokawa K."/>
            <person name="Yorifuji T."/>
            <person name="Kawai M."/>
            <person name="Momoi T."/>
            <person name="Nagasaka H."/>
            <person name="Takayanagi M."/>
            <person name="Kobayashi K."/>
            <person name="Yoshino M."/>
            <person name="Kosho T."/>
            <person name="Adachi M."/>
            <person name="Otsuka H."/>
            <person name="Yamamoto S."/>
            <person name="Murata T."/>
            <person name="Suenaga A."/>
            <person name="Ishii T."/>
            <person name="Terada K."/>
            <person name="Shimura N."/>
            <person name="Kiwaki K."/>
            <person name="Shintaku H."/>
            <person name="Yamakawa M."/>
            <person name="Nakabayashi H."/>
            <person name="Wakutani Y."/>
            <person name="Nakahata T."/>
        </authorList>
    </citation>
    <scope>VARIANTS CPS1D GLU-79; ASN-212; ASN-280; PRO-438; HIS-587; ARG-593; LYS-651; ILE-674; HIS-780; CYS-850; ASP-982; ARG-1103; GLY-1141; PRO-1195; VAL-1215 AND LYS-1241</scope>
</reference>
<reference key="27">
    <citation type="journal article" date="2010" name="Hum. Mutat.">
        <title>Understanding carbamoyl-phosphate synthetase I (CPS1) deficiency by using expression studies and structure-based analysis.</title>
        <authorList>
            <person name="Pekkala S."/>
            <person name="Martinez A.I."/>
            <person name="Barcelona B."/>
            <person name="Yefimenko I."/>
            <person name="Finckh U."/>
            <person name="Rubio V."/>
            <person name="Cervera J."/>
        </authorList>
    </citation>
    <scope>VARIANTS CPS1D PHE-123; ARG-337; ASN-471; PRO-678; LEU-774; LEU-1411; GLN-1453; TRP-1453 AND HIS-1491</scope>
    <scope>VARIANT SER-1376</scope>
    <scope>CHARACTERIZATION OF VARIANTS CPS1D PHE-123; ARG-337; ASN-471; PRO-678; LEU-774; LEU-1411; GLN-1453; TRP-1453 AND HIS-1491</scope>
    <scope>CHARACTERIZATION OF VARIANT SER-1376</scope>
</reference>
<reference key="28">
    <citation type="journal article" date="2010" name="PLoS ONE">
        <title>The T1405N carbamoyl phosphate synthetase polymorphism does not affect plasma arginine concentrations in preterm infants.</title>
        <authorList>
            <person name="Moonen R.M."/>
            <person name="Reyes I."/>
            <person name="Cavallaro G."/>
            <person name="Gonzalez-Luis G."/>
            <person name="Bakker J.A."/>
            <person name="Villamor E."/>
        </authorList>
    </citation>
    <scope>VARIANT ASN-1406</scope>
</reference>
<reference key="29">
    <citation type="journal article" date="2011" name="Hum. Mutat.">
        <title>Molecular defects in human carbamoyl phosphate synthetase I: mutational spectrum, diagnostic and protein structure considerations.</title>
        <authorList>
            <person name="Haberle J."/>
            <person name="Shchelochkov O.A."/>
            <person name="Wang J."/>
            <person name="Katsonis P."/>
            <person name="Hall L."/>
            <person name="Reiss S."/>
            <person name="Eeds A."/>
            <person name="Willis A."/>
            <person name="Yadav M."/>
            <person name="Summar S."/>
            <person name="Lichtarge O."/>
            <person name="Rubio V."/>
            <person name="Wong L.J."/>
            <person name="Summar M."/>
        </authorList>
    </citation>
    <scope>VARIANTS CPS1D VAL-43; ASP-58; PHE-65; GLY-71; SER-87; ASP-89; GLY-165; VAL-224; CYS-233; PRO-243; GLU-258; GLU-263; VAL-304; GLU-317; HIS-358; LEU-382; ARG-401; ARG-431; VAL-432; THR-438; GLU-450; PRO-498; GLU-531; GLY-531; MET-544; CYS-587; HIS-587; LEU-587; LEU-597; MET-622; ASP-628; ARG-632; PRO-638; TYR-648; VAL-654; LYS-674; SER-698; LYS-718; GLN-721; PRO-724; THR-726; VAL-767; HIS-780; ILE-792; SER-803; GLY-803; CYS-803; SER-805; TRP-814; ARG-816; HIS-850; GLU-911; LEU-913; HIS-914; GLY-914; THR-932; THR-949; CYS-959; CYS-962; GLU-978; VAL-982; HIS-984; THR-986; CYS-987; SER-992; SER-1016; LEU-1017; ILE-1022; GLY-1034; ARG-1045; ARG-1059; GLU-1065; CYS-1089; GLU-1155; VAL-1155; LEU-1203; GLN-1228; ASP-1255; GLN-1262; PRO-1262; HIS-1274; ARG-1327; GLU-1333; LEU-1371; MET-1391; VAL-1398; LEU-1439; TRP-1453 AND ARG-1462</scope>
</reference>
<reference key="30">
    <citation type="journal article" date="2011" name="Mol. Genet. Metab.">
        <title>Personalized genomic medicine: lessons from the exome.</title>
        <authorList>
            <consortium name="NISC Comparative Sequencing Program"/>
            <person name="Solomon B.D."/>
            <person name="Pineda-Alvarez D.E."/>
            <person name="Hadley D.W."/>
            <person name="Teer J.K."/>
            <person name="Cherukuri P.F."/>
            <person name="Hansen N.F."/>
            <person name="Cruz P."/>
            <person name="Young A.C."/>
            <person name="Blakesley R.W."/>
            <person name="Lanpher B."/>
            <person name="Mayfield Gibson S."/>
            <person name="Sincan M."/>
            <person name="Chandrasekharappa S.C."/>
            <person name="Mullikin J.C."/>
        </authorList>
    </citation>
    <scope>VARIANTS VAL-530 AND ASN-1406</scope>
</reference>
<reference key="31">
    <citation type="journal article" date="2012" name="Gene">
        <title>Carbamoyl phosphate synthetase 1 deficiency in Italy: clinical and genetic findings in a heterogeneous cohort.</title>
        <authorList>
            <person name="Funghini S."/>
            <person name="Thusberg J."/>
            <person name="Spada M."/>
            <person name="Gasperini S."/>
            <person name="Parini R."/>
            <person name="Ventura L."/>
            <person name="Meli C."/>
            <person name="De Cosmo L."/>
            <person name="Sibilio M."/>
            <person name="Mooney S.D."/>
            <person name="Guerrini R."/>
            <person name="Donati M.A."/>
            <person name="Morrone A."/>
        </authorList>
    </citation>
    <scope>VARIANTS CPS1D SER-341; ARG-661; ASP-964 AND ARG-1167</scope>
</reference>
<reference key="32">
    <citation type="journal article" date="2013" name="Hum. Mutat.">
        <title>Molecular characterization of carbamoyl-phosphate synthetase (CPS1) deficiency using human recombinant CPS1 as a key tool.</title>
        <authorList>
            <person name="Diez-Fernandez C."/>
            <person name="Martinez A.I."/>
            <person name="Pekkala S."/>
            <person name="Barcelona B."/>
            <person name="Perez-Arellano I."/>
            <person name="Guadalajara A.M."/>
            <person name="Summar M."/>
            <person name="Cervera J."/>
            <person name="Rubio V."/>
        </authorList>
    </citation>
    <scope>VARIANTS CPS1D ASP-355; CYS-389; ARG-390; PRO-438; MET-544; THR-1378; SER-1381 AND ALA-1443</scope>
    <scope>VARIANTS ALA-344 AND SER-1376</scope>
    <scope>CHARACTERIZATION OF VARIANTS CPS1D ASP-355; CYS-389; ARG-390; PRO-438; MET-544; THR-1378; SER-1381 AND ALA-1443</scope>
    <scope>CHARACTERIZATION OF VARIANTS ALA-344 AND SER-1376</scope>
    <scope>SUBUNIT</scope>
    <scope>PROTEOLYTIC CLEAVAGE</scope>
    <scope>BIOPHYSICOCHEMICAL PROPERTIES</scope>
    <scope>ACTIVITY REGULATION</scope>
    <scope>CATALYTIC ACTIVITY</scope>
</reference>
<reference key="33">
    <citation type="journal article" date="2014" name="J. Proteome Res.">
        <title>Large-scale quantification of single amino-acid variations by a variation-associated database search strategy.</title>
        <authorList>
            <person name="Song C."/>
            <person name="Wang F."/>
            <person name="Cheng K."/>
            <person name="Wei X."/>
            <person name="Bian Y."/>
            <person name="Wang K."/>
            <person name="Tan Y."/>
            <person name="Wang H."/>
            <person name="Ye M."/>
            <person name="Zou H."/>
        </authorList>
    </citation>
    <scope>VARIANT ASN-1406</scope>
</reference>
<reference key="34">
    <citation type="journal article" date="2014" name="Mol. Genet. Metab.">
        <title>Understanding carbamoyl phosphate synthetase (CPS1) deficiency by using the recombinantly purified human enzyme: effects of CPS1 mutations that concentrate in a central domain of unknown function.</title>
        <authorList>
            <person name="Diez-Fernandez C."/>
            <person name="Hu L."/>
            <person name="Cervera J."/>
            <person name="Haeberle J."/>
            <person name="Rubio V."/>
        </authorList>
    </citation>
    <scope>VARIANTS CPS1D ARG-401; ARG-632; SER-843; CYS-850; HIS-850; PRO-871; VAL-911; GLU-911; LEU-913; HIS-914; GLY-914; PRO-918; THR-932; ASN-937; THR-949; PRO-958; CYS-959; CYS-962; ASP-964; ASP-1194 AND ARG-1462</scope>
    <scope>VARIANT GLU-875</scope>
    <scope>CHARACTERIZATION OF VARIANTS CPS1D SER-843; CYS-850; HIS-850; PRO-871; VAL-911; GLU-911; LEU-913; HIS-914; GLY-914; PRO-918; THR-932; ASN-937; THR-949; PRO-958; CYS-959; CYS-962 AND ASP-964</scope>
    <scope>CATALYTIC ACTIVITY</scope>
    <scope>CHARACTERIZATION OF VARIANT GLU-875</scope>
</reference>
<reference key="35">
    <citation type="journal article" date="2016" name="Eur. J. Pediatr.">
        <title>Carbamoylphosphate synthetase 1 (CPS1) deficiency: clinical, biochemical, and molecular characterization in Malaysian patients.</title>
        <authorList>
            <person name="Ali E.Z."/>
            <person name="Khalid M.K."/>
            <person name="Yunus Z.M."/>
            <person name="Yakob Y."/>
            <person name="Chin C.B."/>
            <person name="Latif K.A."/>
            <person name="Hock N.L."/>
        </authorList>
    </citation>
    <scope>VARIANTS CPS1D TYR-123; TRP-174; GLY-803; HIS-850; PHE-1254 AND 1363-LEU--ILE-1366 DEL</scope>
</reference>
<reference key="36">
    <citation type="journal article" date="2016" name="Nature">
        <title>Analysis of protein-coding genetic variation in 60,706 humans.</title>
        <authorList>
            <consortium name="Exome Aggregation Consortium"/>
            <person name="Lek M."/>
            <person name="Karczewski K.J."/>
            <person name="Minikel E.V."/>
            <person name="Samocha K.E."/>
            <person name="Banks E."/>
            <person name="Fennell T."/>
            <person name="O'Donnell-Luria A.H."/>
            <person name="Ware J.S."/>
            <person name="Hill A.J."/>
            <person name="Cummings B.B."/>
            <person name="Tukiainen T."/>
            <person name="Birnbaum D.P."/>
            <person name="Kosmicki J.A."/>
            <person name="Duncan L.E."/>
            <person name="Estrada K."/>
            <person name="Zhao F."/>
            <person name="Zou J."/>
            <person name="Pierce-Hoffman E."/>
            <person name="Berghout J."/>
            <person name="Cooper D.N."/>
            <person name="Deflaux N."/>
            <person name="DePristo M."/>
            <person name="Do R."/>
            <person name="Flannick J."/>
            <person name="Fromer M."/>
            <person name="Gauthier L."/>
            <person name="Goldstein J."/>
            <person name="Gupta N."/>
            <person name="Howrigan D."/>
            <person name="Kiezun A."/>
            <person name="Kurki M.I."/>
            <person name="Moonshine A.L."/>
            <person name="Natarajan P."/>
            <person name="Orozco L."/>
            <person name="Peloso G.M."/>
            <person name="Poplin R."/>
            <person name="Rivas M.A."/>
            <person name="Ruano-Rubio V."/>
            <person name="Rose S.A."/>
            <person name="Ruderfer D.M."/>
            <person name="Shakir K."/>
            <person name="Stenson P.D."/>
            <person name="Stevens C."/>
            <person name="Thomas B.P."/>
            <person name="Tiao G."/>
            <person name="Tusie-Luna M.T."/>
            <person name="Weisburd B."/>
            <person name="Won H.H."/>
            <person name="Yu D."/>
            <person name="Altshuler D.M."/>
            <person name="Ardissino D."/>
            <person name="Boehnke M."/>
            <person name="Danesh J."/>
            <person name="Donnelly S."/>
            <person name="Elosua R."/>
            <person name="Florez J.C."/>
            <person name="Gabriel S.B."/>
            <person name="Getz G."/>
            <person name="Glatt S.J."/>
            <person name="Hultman C.M."/>
            <person name="Kathiresan S."/>
            <person name="Laakso M."/>
            <person name="McCarroll S."/>
            <person name="McCarthy M.I."/>
            <person name="McGovern D."/>
            <person name="McPherson R."/>
            <person name="Neale B.M."/>
            <person name="Palotie A."/>
            <person name="Purcell S.M."/>
            <person name="Saleheen D."/>
            <person name="Scharf J.M."/>
            <person name="Sklar P."/>
            <person name="Sullivan P.F."/>
            <person name="Tuomilehto J."/>
            <person name="Tsuang M.T."/>
            <person name="Watkins H.C."/>
            <person name="Wilson J.G."/>
            <person name="Daly M.J."/>
            <person name="MacArthur D.G."/>
        </authorList>
    </citation>
    <scope>VARIANT GLU-875</scope>
</reference>
<organism>
    <name type="scientific">Homo sapiens</name>
    <name type="common">Human</name>
    <dbReference type="NCBI Taxonomy" id="9606"/>
    <lineage>
        <taxon>Eukaryota</taxon>
        <taxon>Metazoa</taxon>
        <taxon>Chordata</taxon>
        <taxon>Craniata</taxon>
        <taxon>Vertebrata</taxon>
        <taxon>Euteleostomi</taxon>
        <taxon>Mammalia</taxon>
        <taxon>Eutheria</taxon>
        <taxon>Euarchontoglires</taxon>
        <taxon>Primates</taxon>
        <taxon>Haplorrhini</taxon>
        <taxon>Catarrhini</taxon>
        <taxon>Hominidae</taxon>
        <taxon>Homo</taxon>
    </lineage>
</organism>
<evidence type="ECO:0000250" key="1"/>
<evidence type="ECO:0000250" key="2">
    <source>
        <dbReference type="UniProtKB" id="P07756"/>
    </source>
</evidence>
<evidence type="ECO:0000250" key="3">
    <source>
        <dbReference type="UniProtKB" id="Q8C196"/>
    </source>
</evidence>
<evidence type="ECO:0000255" key="4">
    <source>
        <dbReference type="PROSITE-ProRule" id="PRU01202"/>
    </source>
</evidence>
<evidence type="ECO:0000269" key="5">
    <source>
    </source>
</evidence>
<evidence type="ECO:0000269" key="6">
    <source>
    </source>
</evidence>
<evidence type="ECO:0000269" key="7">
    <source>
    </source>
</evidence>
<evidence type="ECO:0000269" key="8">
    <source>
    </source>
</evidence>
<evidence type="ECO:0000269" key="9">
    <source>
    </source>
</evidence>
<evidence type="ECO:0000269" key="10">
    <source>
    </source>
</evidence>
<evidence type="ECO:0000269" key="11">
    <source>
    </source>
</evidence>
<evidence type="ECO:0000269" key="12">
    <source>
    </source>
</evidence>
<evidence type="ECO:0000269" key="13">
    <source>
    </source>
</evidence>
<evidence type="ECO:0000269" key="14">
    <source>
    </source>
</evidence>
<evidence type="ECO:0000269" key="15">
    <source>
    </source>
</evidence>
<evidence type="ECO:0000269" key="16">
    <source>
    </source>
</evidence>
<evidence type="ECO:0000269" key="17">
    <source>
    </source>
</evidence>
<evidence type="ECO:0000269" key="18">
    <source>
    </source>
</evidence>
<evidence type="ECO:0000269" key="19">
    <source>
    </source>
</evidence>
<evidence type="ECO:0000269" key="20">
    <source>
    </source>
</evidence>
<evidence type="ECO:0000269" key="21">
    <source>
    </source>
</evidence>
<evidence type="ECO:0000269" key="22">
    <source>
    </source>
</evidence>
<evidence type="ECO:0000269" key="23">
    <source>
    </source>
</evidence>
<evidence type="ECO:0000269" key="24">
    <source>
    </source>
</evidence>
<evidence type="ECO:0000269" key="25">
    <source>
    </source>
</evidence>
<evidence type="ECO:0000269" key="26">
    <source>
    </source>
</evidence>
<evidence type="ECO:0000269" key="27">
    <source>
    </source>
</evidence>
<evidence type="ECO:0000269" key="28">
    <source>
    </source>
</evidence>
<evidence type="ECO:0000269" key="29">
    <source>
    </source>
</evidence>
<evidence type="ECO:0000269" key="30">
    <source ref="11"/>
</evidence>
<evidence type="ECO:0000303" key="31">
    <source>
    </source>
</evidence>
<evidence type="ECO:0000303" key="32">
    <source ref="11"/>
</evidence>
<evidence type="ECO:0000303" key="33">
    <source ref="4"/>
</evidence>
<evidence type="ECO:0000305" key="34"/>
<evidence type="ECO:0007744" key="35">
    <source>
    </source>
</evidence>
<evidence type="ECO:0007744" key="36">
    <source>
    </source>
</evidence>
<evidence type="ECO:0007829" key="37">
    <source>
        <dbReference type="PDB" id="2YVQ"/>
    </source>
</evidence>
<evidence type="ECO:0007829" key="38">
    <source>
        <dbReference type="PDB" id="5DOT"/>
    </source>
</evidence>
<evidence type="ECO:0007829" key="39">
    <source>
        <dbReference type="PDB" id="5DOU"/>
    </source>
</evidence>
<evidence type="ECO:0007829" key="40">
    <source>
        <dbReference type="PDB" id="6UEL"/>
    </source>
</evidence>
<evidence type="ECO:0007829" key="41">
    <source>
        <dbReference type="PDB" id="6W2J"/>
    </source>
</evidence>
<gene>
    <name type="primary">CPS1</name>
</gene>